<evidence type="ECO:0000250" key="1">
    <source>
        <dbReference type="UniProtKB" id="Q07954"/>
    </source>
</evidence>
<evidence type="ECO:0000250" key="2">
    <source>
        <dbReference type="UniProtKB" id="Q91ZX7"/>
    </source>
</evidence>
<evidence type="ECO:0000255" key="3"/>
<evidence type="ECO:0000255" key="4">
    <source>
        <dbReference type="PROSITE-ProRule" id="PRU00076"/>
    </source>
</evidence>
<evidence type="ECO:0000255" key="5">
    <source>
        <dbReference type="PROSITE-ProRule" id="PRU00124"/>
    </source>
</evidence>
<evidence type="ECO:0000255" key="6">
    <source>
        <dbReference type="PROSITE-ProRule" id="PRU00461"/>
    </source>
</evidence>
<evidence type="ECO:0000255" key="7">
    <source>
        <dbReference type="PROSITE-ProRule" id="PRU00498"/>
    </source>
</evidence>
<evidence type="ECO:0000269" key="8">
    <source>
    </source>
</evidence>
<evidence type="ECO:0000305" key="9"/>
<evidence type="ECO:0000312" key="10">
    <source>
        <dbReference type="EMBL" id="AAH88327.1"/>
    </source>
</evidence>
<evidence type="ECO:0000312" key="11">
    <source>
        <dbReference type="EMBL" id="EDM16460.1"/>
    </source>
</evidence>
<evidence type="ECO:0000312" key="12">
    <source>
        <dbReference type="RGD" id="1307535"/>
    </source>
</evidence>
<sequence>MLTPPLLLLLPLLSALVAGATMDAPKTCSPKQFACRDQITCISKGWRCDGERDCPDGSDEAPEICPQSKAQRCPPNEHSCLGTELCVPMSRLCNGIQDCMDGSDEGAHCRELRVNCSRMGCQHHCVPTPSGPTCYCNNSFQLQADGKTCKDFDECSVYGTCSQLCTNTDGSFTCGCVEGYLLQPDNRSCKAKNEPVDRPPVLLIANSQNILATYLSGAQVSTITPTSTRQTTAMDFSYANETVCWVHVGDSAAQTQLKCARMPSLKGFVDEHTINISLSLHHVEQMAIDWLTGNFYFVDDIDDRIFVCNRNGDTCVTLLDLELYNPKGIALDPAMGKVFFTDYGQIPKVERCDMDGQNRTKLVDSKIVFPHGITLDLVSRLVYWADAYLDYIEVVDYEGKGRQTIIQGILIEHLYGLTVFENYLYATNSDNANTQQKTSVIRVNRFNSTEYQVVTRVDKGGALHIYHQRRQPRVRSHACENDQYGKPGGCSDICLLANSHKARTCRCRSGFSLGSDGKSCKKPEHELFLVYGKGRPGIIRGMDMGAKVPDEHMIPIENLMNPRALDFHAETGFIYFADTTSYLIGRQKIDGTERETILKDGIHNVEGVAVDWMGDNLYWTDDGPKKTISVARLEKAAQTRKTLIEGKMTHPRAIVVDPLNGWMYWTDWEEDPKDSRRGRLERAWMDGSHRDIFVTSKTVLWPNGLSLDIPAGRLYWVDAFYDRIETILLNGTDRKIVYEGPELNHAFGLCHHGNYLFWTEYRSGSVYRLERGVAGAQPTVTLLRSERPPIFEIRMYDAQQQQVGTNKCRVNNGGCSSLCLATPGSRQCACAEDQVLDADGVTCLANPSYVPPPQCQPGEFACANNRCIQERWKCDGDNDCLDNSDEAPALCHQHTCPSDRFKCENNRCIPNRWLCDGDNDCGNSEDESNATCSARTCPPNQFSCASGRCIPISWTCDLDDDCGDRSDESASCAYPTCFPLTQFTCNNGRCININWRCDNDNDCGDNSDEAGCSHSCSSTQFKCNSGRCIPEHWTCDGDNDCGDYSDETHANCTNQATRPPGGCHSDEFQCRLDGLCIPLRWRCDGDTDCMDSSDEKGCEGVTHVCDPNVKFGCKDSARCISKAWVCDGDSDCEDNSDEENCEALACRPPSHPCANNTSVCLSPDKLCDGKDDCGDGSDEGELCDQCSLNNGGCSHNCSVAPGEGIVCSCPLGMELGPDNHTCQIQSYCAKHLKCSQKCDQNKFSVKCSCYEGWVLEPDGESCRSLDPFKPFIIFSNRHEIRRIDLHKGDYSVLVPGLRNTIALDFHLSQSALYWTDVVEDKIYRGKLLDNGALTSFEVVIQYGLATPEGLAVDWIAGNIYWVESNLDQIEVAKLDGTLRTTLLAGDIEHPRAIALDPRDGILFWTDWDASLPRIEAASMSGAGRRTIHRETGSGGWPNGLTVDYLEKRILWIDARSDAIYSARYDGSGHMEVLRGHEFLSHPFAVTLYGGEVYWTDWRTNTLAKANKWTGHNVTVVQRTNTQPFDLQVYHPSRQPMAPNPCEANGGRGPCSHLCLINYNRTVSCACPHLMKLHNDNTTCYEFKKFLLYARQMEIRGVDLDAPYYNYIISFTVPDIDNVTVLDYDAREQRVYWSDVRTQAIKRAFINGTGVETVVSADLPNAHGLAVDWVSRNLFWTSYDTNKKQINVARLDGSFKNAVVQGLEQPHGLVVHPLRGKLYWTDGDNISMVNMDGSNRTLLFSGQKGPVGLAIDFPESKLYWISSGNHTINRCNLDGSELEVIDTMRSQLGKATALAIMGDKLWWADQVSEKMGTCNKADGSGSVVLRNSTTLVMHMKVYDESIQLEHEGTNPCSVNNGDCSQLCLPTSETTRSCMCTAGYSLRSGQQACEGVGSFLLYSVHEGIRGIPLDPNDKSDALVPVSGTSLAVGIDFHAENDTIYWVDMGLSTISRAKRDQTWREDVVTNGIGRVEGIAVDWIAGNIYWTDQGFDVIEVARLNGSFRYVVISQGLDKPRAITVHPEKGYLFWTEWGHYPRIERSRLDGTERVVLVNVSISWPNGISVDYQGGKLYWCDARMDKIERIDLETGENREVVLSSNNMDMFSVSVFEDFIYWSDRTHANGSIKRGCKDNATDSVPLRTGIGVQLKDIKVFNRDRQKGTNVCAVANGGCQQLCLYRGGGQRACACAHGMLAEDGASCREYAGYLLYSERTILKSIHLSDERNLNAPVQPFEDPEHMKNVIALAFDYRAGTSPGTPNRIFFSDIHFGNIQQINDDGSGRTTIVENVGSVEGLAYHRGWDTLYWTSYTTSTITRHTVDQTRPGAFERETVITMSGDDHPRAFVLDECQNLMFWTNWNELHPSIMRAALSGANVLTLIEKDIRTPNGLAIDHRAEKLYFSDATLDKIERCEYDGSHRYVILKSEPVHPFGLAVYGEHIFWTDWVRRAVQRANKYVGSDMKLLRVDIPQQPMGIIAVANDTNSCELSPCRINNGGCQDLCLLTHQGHVNCSCRGGRILQEDFTCRAMNSSCRAQDEFECANGECISFSLTCDGVSHCKDKSDEKPSYCNSRRCKKTFRQCNNGRCVSNMLWCNGVDDCGDGSDEIPCNKTACGVGEFRCRDGSCIGNSSRCNQFVDCEDASDEMNCSATDCSSYFRLGVKGVLFQPCERTSLCYAPSWVCDGANDCGDYSDERDCPGVKRPRCPLNYFACPSGRCIPMSWTCDKEDDCENGEDETHCNKFCSEAQFECQNHRCISKQWLCDGSDDCGDGSDEAAHCEGKTCGPSSFSCPGTHVCVPERWLCDGDKDCADGADESISAGCLYNSTCDDREFMCQNRLCIPKHFVCDHDRDCADGSDESPECEYPTCGPNEFRCANGRCLSSRQWECDGENDCHDHSDEAPKNPHCTSPEHKCNASSQFLCSSGRCVAEALLCNGQDDCGDGSDERGCHVNECLSRKLSGCSQDCEDLKIGFKCRCRPGFRLKDDGRTCADVDECSTTFPCSQLCINTHGSYKCLCVEGYAPRGGDPHSCKAVTDEEPFLIFANRYYLRKLNLDGSNYTLLKQGLNNAVALDFDYRGQMIYWTDVTTQGSMIRRMHLNGSNVQVLHRTGLSNPDGLAVDWVGGNLYWCDKGRDTIEVSKLNGAYRTVLVSSGLREPRALVVDVQNGYLYWTDWGDHSLIGRIGMDGSGRSIIVDTKITWPNGLTVDYVTERIYWADAREDYIEFASLDGSNRHVVLSQDIPHIFALTLFEDYVYWTDWETKSINRAHKTTGANKTLLISTLHRPMDLHVFHALRQPDVPNHPCKVNNGGCSNLCLLSPGGGHKCACPTNFYLGGDGRTCVSNCTASQFVCKNDKCIPFWWKCDTEDDCGDHSDEPPDCPEFKCRPGQFQCSTGICTNPAFICDGDNDCQDNSDEANCDIHVCLPSQFKCTNTNRCIPGIFRCNGQDNCGDGEDERDCPEVTCAPNQFQCSITKRCIPRVWVCDRDNDCVDGSDEPANCTQMTCGVDEFRCKDSGRCIPARWKCDGEDDCGDGSDEPKEECDERTCEPYQFRCKNNRCVPGRWQCDYDNDCGDNSDEESCTPRPCSESEFSCANGRCIAGRWKCDGDHDCADGSDEKDCTPRCDMDQFQCKSGHCIPLRWRCDADADCMDGSDEEACGTGVRTCPLDEFQCNNTLCKPLAWKCDGEDDCGDNSDENPEECTRFQCPPNRPFRCKNDRVCLWIGRQCDGTDNCGDGTDEEDCEPPTAQNPHCKDKKEFLCRNQRCLSSSLRCNMFDDCGDGSDEEDCSIDPKLTSCATNASMCGDEARCVRTEKAAYCACRPGFHTVPGQPGCQDINECLRFGTCSQLCNNTKGGHLCSCARNFMKTHNTCKAEGSEYQVLYIADDNEIRSLFPGHPHSAYEQAFQGDESVRIDAMDVHVKAGRVYWTNWHTGTISYRSLPPAAPPTTSNRHRRQIDRGVTHLNISGLKMPRGIAIDWVAGNVYWTDSGRDVIEVAQMKGENRKTLISGMIDEPHAIVVDPLRGTMYWSDWGNHPKIETAAMDGTLRETLVQDNIQWPTGLAVDYHNERLYWADAKLSVIGSIRLNGTDPIVAVDSKRGLSHPFSIDVFEDYIYGVTYINNRVFKIHKFGHSPLINLTGGLSHASDVVLYHQHKQPEVTNPCDRKKCEWLCLLSPSGPVCTCPNGKRLDNGTCVPVPSPTPPPDAPRPGTCTLQCFNGGSCFLNARRQPKCRCQPRYTGDKCELDQCWEYCHNGGTCAASPSGMPTCRCPTGFTGPRCTQQVCAGYCANNSTCTVNQGNQPQCRCLPGFLGDRCQYRQCSGFCENFGTCQMAADGSRQCRCTVYFEGTRCEVNKCSRCLQGACVVNKQTGDVTCNCTDGRVAPSCLTCIDHCSNGGSCTMNSKMMPECQCPPHMTGPRCEEQVVSQQQPGHMTSILIPLLLLLLLLLVAGVVFWYKRRVRGAKGFQHQRMTNGAMNVEIGNPTYKMYEGGEPDDVGGLLDADFALDPDKPTNFTNPVYATLYMGGHGSRHSLASTDEKRELLGRGPEDEIGDPLA</sequence>
<proteinExistence type="evidence at protein level"/>
<accession>G3V928</accession>
<accession>Q5I0H1</accession>
<protein>
    <recommendedName>
        <fullName evidence="9">Prolow-density lipoprotein receptor-related protein 1</fullName>
        <shortName>LRP-1</shortName>
    </recommendedName>
    <component>
        <recommendedName>
            <fullName evidence="1">Low-density lipoprotein receptor-related protein 1 85 kDa subunit</fullName>
            <shortName evidence="1">LRP-85</shortName>
        </recommendedName>
    </component>
    <component>
        <recommendedName>
            <fullName evidence="1">Low-density lipoprotein receptor-related protein 1 515 kDa subunit</fullName>
            <shortName evidence="1">LRP-515</shortName>
        </recommendedName>
    </component>
    <component>
        <recommendedName>
            <fullName evidence="1">Low-density lipoprotein receptor-related protein 1 intracellular domain</fullName>
            <shortName evidence="1">LRPICD</shortName>
        </recommendedName>
    </component>
</protein>
<organism>
    <name type="scientific">Rattus norvegicus</name>
    <name type="common">Rat</name>
    <dbReference type="NCBI Taxonomy" id="10116"/>
    <lineage>
        <taxon>Eukaryota</taxon>
        <taxon>Metazoa</taxon>
        <taxon>Chordata</taxon>
        <taxon>Craniata</taxon>
        <taxon>Vertebrata</taxon>
        <taxon>Euteleostomi</taxon>
        <taxon>Mammalia</taxon>
        <taxon>Eutheria</taxon>
        <taxon>Euarchontoglires</taxon>
        <taxon>Glires</taxon>
        <taxon>Rodentia</taxon>
        <taxon>Myomorpha</taxon>
        <taxon>Muroidea</taxon>
        <taxon>Muridae</taxon>
        <taxon>Murinae</taxon>
        <taxon>Rattus</taxon>
    </lineage>
</organism>
<comment type="function">
    <text evidence="1 2">Endocytic receptor involved in endocytosis and in phagocytosis of apoptotic cells (By similarity). Required for early embryonic development (By similarity). Involved in cellular lipid homeostasis. Involved in the plasma clearance of chylomicron remnants and activated LRPAP1 (alpha 2-macroglobulin), as well as the local metabolism of complexes between plasminogen activators and their endogenous inhibitors. Acts as an LRPAP1 alpha-2-macroglobulin receptor. Acts as a TAU/MAPT receptor and controls the endocytosis of TAU/MAPT as well as its subsequent spread. May modulate cellular events, such as APP metabolism, kinase-dependent intracellular signaling, neuronal calcium signaling as well as neurotransmission. Also acts as a receptor for IGFBP3 to mediate cell growth inhibition (By similarity).</text>
</comment>
<comment type="subunit">
    <text evidence="1 2">Heterodimer of an 85-kDa membrane-bound carboxyl subunit and a non-covalently attached 515-kDa N-terminal subunit. Intracellular domain interacts with MAFB (By similarity). Found in a complex with PID1/PCLI1, LRP1 and CUBNI. Interacts with SNX17, PID1/PCLI1, PDGF and CUBN. The intracellular domain interacts with SHC1, GULP1 and DAB1. Can weakly interact (via NPXY motif) with DAB2 (via PID domain); the interaction is enhanced by tyrosine phosphorylation of the NPXY motif. Interacts with MDK; promotes neuronal survival. Interacts with LRPAP1; this interaction is followed by rapid internalization. Interacts with uPA/PLAU and PAI1/SERPINE1, either individually or in complex with each other, leading to rapid endocytosis; this interaction is abolished in the presence of LRPAP1/RAP. Also interacts with tPA/PLAT alone or in complex with SERPINE1. Interacts with the urokinase receptor PLAUR; this interaction leads to PLAUR internalization and is impaired in the presence of SORL1. Interacts with PDGFB. Interacts with TAU/MAPT, leading to endocytosis; this interaction is reduced in the presence of LRPAP1/RAP (By similarity). Interacts with IGFBP3 (By similarity). Interacts with ADGRG6 (By similarity).</text>
</comment>
<comment type="subcellular location">
    <molecule>Low-density lipoprotein receptor-related protein 1 85 kDa subunit</molecule>
    <subcellularLocation>
        <location evidence="1">Cell membrane</location>
        <topology evidence="1">Single-pass type I membrane protein</topology>
    </subcellularLocation>
    <subcellularLocation>
        <location evidence="1">Membrane</location>
        <location evidence="1">Coated pit</location>
    </subcellularLocation>
</comment>
<comment type="subcellular location">
    <molecule>Low-density lipoprotein receptor-related protein 1 515 kDa subunit</molecule>
    <subcellularLocation>
        <location evidence="1">Cell membrane</location>
        <topology evidence="1">Peripheral membrane protein</topology>
        <orientation evidence="1">Extracellular side</orientation>
    </subcellularLocation>
    <subcellularLocation>
        <location evidence="1">Membrane</location>
        <location evidence="1">Coated pit</location>
    </subcellularLocation>
</comment>
<comment type="subcellular location">
    <subcellularLocation>
        <location evidence="8">Golgi outpost</location>
    </subcellularLocation>
    <subcellularLocation>
        <location evidence="8">Cytoplasm</location>
        <location evidence="8">Cytoskeleton</location>
        <location evidence="8">Microtubule organizing center</location>
    </subcellularLocation>
    <text evidence="8">Localizes to the postsynaptic Golgi apparatus region, also named Golgi outpost, which shapes dendrite morphology by functioning as sites of acentrosomal microtubule nucleation.</text>
</comment>
<comment type="subcellular location">
    <molecule>Low-density lipoprotein receptor-related protein 1 intracellular domain</molecule>
    <subcellularLocation>
        <location evidence="1">Cytoplasm</location>
    </subcellularLocation>
    <subcellularLocation>
        <location evidence="1">Nucleus</location>
    </subcellularLocation>
    <text evidence="1">After cleavage, the intracellular domain (LRPICD) is detected both in the cytoplasm and in the nucleus.</text>
</comment>
<comment type="PTM">
    <text evidence="1">Cleaved into a 85 kDa membrane-spanning subunit (LRP-85) and a 515 kDa large extracellular domain (LRP-515) that remains non-covalently associated. Gamma-secretase-dependent cleavage of LRP-85 releases the intracellular domain from the membrane.</text>
</comment>
<comment type="PTM">
    <text evidence="1">Phosphorylated on serine and threonine residues.</text>
</comment>
<comment type="PTM">
    <text evidence="1">Phosphorylated on tyrosine residues upon stimulation with PDGF. Tyrosine phosphorylation promotes interaction with SHC1.</text>
</comment>
<comment type="similarity">
    <text evidence="9">Belongs to the LDLR family.</text>
</comment>
<feature type="signal peptide" evidence="3">
    <location>
        <begin position="1"/>
        <end position="19"/>
    </location>
</feature>
<feature type="chain" id="PRO_5015091774" description="Prolow-density lipoprotein receptor-related protein 1" evidence="3">
    <location>
        <begin position="20"/>
        <end position="4545"/>
    </location>
</feature>
<feature type="chain" id="PRO_0000448596" description="Low-density lipoprotein receptor-related protein 1 515 kDa subunit" evidence="1">
    <location>
        <begin position="20"/>
        <end position="3944" status="uncertain"/>
    </location>
</feature>
<feature type="chain" id="PRO_0000448597" description="Low-density lipoprotein receptor-related protein 1 85 kDa subunit" evidence="1">
    <location>
        <begin position="3945"/>
        <end position="4545"/>
    </location>
</feature>
<feature type="chain" id="PRO_0000448598" description="Low-density lipoprotein receptor-related protein 1 intracellular domain" evidence="1">
    <location>
        <begin position="4442"/>
        <end position="4545"/>
    </location>
</feature>
<feature type="topological domain" description="Extracellular" evidence="9">
    <location>
        <begin position="20"/>
        <end position="4424"/>
    </location>
</feature>
<feature type="transmembrane region" description="Helical" evidence="3">
    <location>
        <begin position="4425"/>
        <end position="4445"/>
    </location>
</feature>
<feature type="topological domain" description="Cytoplasmic" evidence="9">
    <location>
        <begin position="4446"/>
        <end position="4545"/>
    </location>
</feature>
<feature type="domain" description="LDL-receptor class A 1" evidence="5">
    <location>
        <begin position="27"/>
        <end position="66"/>
    </location>
</feature>
<feature type="domain" description="LDL-receptor class A 2" evidence="5">
    <location>
        <begin position="72"/>
        <end position="110"/>
    </location>
</feature>
<feature type="repeat" description="LDL-receptor class B 1" evidence="6">
    <location>
        <begin position="293"/>
        <end position="335"/>
    </location>
</feature>
<feature type="repeat" description="LDL-receptor class B 2" evidence="6">
    <location>
        <begin position="336"/>
        <end position="379"/>
    </location>
</feature>
<feature type="repeat" description="LDL-receptor class B 3" evidence="6">
    <location>
        <begin position="380"/>
        <end position="423"/>
    </location>
</feature>
<feature type="repeat" description="LDL-receptor class B 4" evidence="6">
    <location>
        <begin position="572"/>
        <end position="614"/>
    </location>
</feature>
<feature type="repeat" description="LDL-receptor class B 5" evidence="6">
    <location>
        <begin position="615"/>
        <end position="660"/>
    </location>
</feature>
<feature type="repeat" description="HAT 1" evidence="3">
    <location>
        <begin position="639"/>
        <end position="671"/>
    </location>
</feature>
<feature type="repeat" description="LDL-receptor class B 6" evidence="6">
    <location>
        <begin position="661"/>
        <end position="711"/>
    </location>
</feature>
<feature type="repeat" description="LDL-receptor class B 7" evidence="6">
    <location>
        <begin position="712"/>
        <end position="755"/>
    </location>
</feature>
<feature type="domain" description="LDL-receptor class A 3" evidence="5">
    <location>
        <begin position="854"/>
        <end position="892"/>
    </location>
</feature>
<feature type="domain" description="LDL-receptor class A 4" evidence="5">
    <location>
        <begin position="895"/>
        <end position="933"/>
    </location>
</feature>
<feature type="domain" description="LDL-receptor class A 5" evidence="5">
    <location>
        <begin position="936"/>
        <end position="973"/>
    </location>
</feature>
<feature type="domain" description="LDL-receptor class A 6" evidence="5">
    <location>
        <begin position="976"/>
        <end position="1013"/>
    </location>
</feature>
<feature type="domain" description="LDL-receptor class A 7" evidence="5">
    <location>
        <begin position="1015"/>
        <end position="1053"/>
    </location>
</feature>
<feature type="domain" description="LDL-receptor class A 8" evidence="5">
    <location>
        <begin position="1062"/>
        <end position="1099"/>
    </location>
</feature>
<feature type="domain" description="LDL-receptor class A 9" evidence="5">
    <location>
        <begin position="1104"/>
        <end position="1142"/>
    </location>
</feature>
<feature type="domain" description="LDL-receptor class A 10" evidence="5">
    <location>
        <begin position="1145"/>
        <end position="1184"/>
    </location>
</feature>
<feature type="repeat" description="LDL-receptor class B 8" evidence="6">
    <location>
        <begin position="1310"/>
        <end position="1356"/>
    </location>
</feature>
<feature type="repeat" description="LDL-receptor class B 9" evidence="6">
    <location>
        <begin position="1357"/>
        <end position="1399"/>
    </location>
</feature>
<feature type="repeat" description="HAT 2" evidence="3">
    <location>
        <begin position="1380"/>
        <end position="1413"/>
    </location>
</feature>
<feature type="repeat" description="LDL-receptor class B 10" evidence="6">
    <location>
        <begin position="1400"/>
        <end position="1446"/>
    </location>
</feature>
<feature type="repeat" description="LDL-receptor class B 11" evidence="6">
    <location>
        <begin position="1447"/>
        <end position="1491"/>
    </location>
</feature>
<feature type="repeat" description="HAT 3" evidence="3">
    <location>
        <begin position="1470"/>
        <end position="1503"/>
    </location>
</feature>
<feature type="repeat" description="LDL-receptor class B 12" evidence="6">
    <location>
        <begin position="1492"/>
        <end position="1532"/>
    </location>
</feature>
<feature type="repeat" description="LDL-receptor class B 13" evidence="6">
    <location>
        <begin position="1628"/>
        <end position="1670"/>
    </location>
</feature>
<feature type="repeat" description="HAT 4" evidence="3">
    <location>
        <begin position="1653"/>
        <end position="1684"/>
    </location>
</feature>
<feature type="repeat" description="LDL-receptor class B 14" evidence="6">
    <location>
        <begin position="1671"/>
        <end position="1714"/>
    </location>
</feature>
<feature type="repeat" description="LDL-receptor class B 15" evidence="6">
    <location>
        <begin position="1715"/>
        <end position="1754"/>
    </location>
</feature>
<feature type="repeat" description="LDL-receptor class B 16" evidence="6">
    <location>
        <begin position="1755"/>
        <end position="1799"/>
    </location>
</feature>
<feature type="repeat" description="LDL-receptor class B 17" evidence="6">
    <location>
        <begin position="1935"/>
        <end position="1977"/>
    </location>
</feature>
<feature type="repeat" description="LDL-receptor class B 18" evidence="6">
    <location>
        <begin position="1978"/>
        <end position="2020"/>
    </location>
</feature>
<feature type="repeat" description="LDL-receptor class B 19" evidence="6">
    <location>
        <begin position="2021"/>
        <end position="2064"/>
    </location>
</feature>
<feature type="repeat" description="LDL-receptor class B 20" evidence="6">
    <location>
        <begin position="2065"/>
        <end position="2108"/>
    </location>
</feature>
<feature type="repeat" description="LDL-receptor class B 21" evidence="6">
    <location>
        <begin position="2254"/>
        <end position="2295"/>
    </location>
</feature>
<feature type="repeat" description="HAT 5" evidence="3">
    <location>
        <begin position="2277"/>
        <end position="2309"/>
    </location>
</feature>
<feature type="repeat" description="LDL-receptor class B 22" evidence="6">
    <location>
        <begin position="2296"/>
        <end position="2344"/>
    </location>
</feature>
<feature type="repeat" description="HAT 6" evidence="3">
    <location>
        <begin position="2325"/>
        <end position="2358"/>
    </location>
</feature>
<feature type="repeat" description="LDL-receptor class B 23" evidence="6">
    <location>
        <begin position="2345"/>
        <end position="2389"/>
    </location>
</feature>
<feature type="repeat" description="LDL-receptor class B 24" evidence="6">
    <location>
        <begin position="2390"/>
        <end position="2432"/>
    </location>
</feature>
<feature type="repeat" description="HAT 7" evidence="3">
    <location>
        <begin position="2411"/>
        <end position="2444"/>
    </location>
</feature>
<feature type="repeat" description="LDL-receptor class B 25" evidence="6">
    <location>
        <begin position="2433"/>
        <end position="2474"/>
    </location>
</feature>
<feature type="domain" description="LDL-receptor class A 11" evidence="5">
    <location>
        <begin position="2524"/>
        <end position="2563"/>
    </location>
</feature>
<feature type="domain" description="LDL-receptor class A 12" evidence="5">
    <location>
        <begin position="2566"/>
        <end position="2602"/>
    </location>
</feature>
<feature type="domain" description="LDL-receptor class A 13" evidence="5">
    <location>
        <begin position="2605"/>
        <end position="2641"/>
    </location>
</feature>
<feature type="domain" description="LDL-receptor class A 14" evidence="5">
    <location>
        <begin position="2639"/>
        <end position="2690"/>
    </location>
</feature>
<feature type="domain" description="LDL-receptor class A 15" evidence="5">
    <location>
        <begin position="2696"/>
        <end position="2732"/>
    </location>
</feature>
<feature type="domain" description="LDL-receptor class A 16" evidence="5">
    <location>
        <begin position="2734"/>
        <end position="2771"/>
    </location>
</feature>
<feature type="domain" description="LDL-receptor class A 17" evidence="5">
    <location>
        <begin position="2774"/>
        <end position="2814"/>
    </location>
</feature>
<feature type="domain" description="LDL-receptor class A 18" evidence="5">
    <location>
        <begin position="2818"/>
        <end position="2855"/>
    </location>
</feature>
<feature type="domain" description="LDL-receptor class A 19" evidence="5">
    <location>
        <begin position="2858"/>
        <end position="2899"/>
    </location>
</feature>
<feature type="domain" description="LDL-receptor class A 20" evidence="5">
    <location>
        <begin position="2904"/>
        <end position="2941"/>
    </location>
</feature>
<feature type="domain" description="EGF-like 1; calcium-binding" evidence="4">
    <location>
        <begin position="2983"/>
        <end position="3018"/>
    </location>
</feature>
<feature type="repeat" description="LDL-receptor class B 26" evidence="6">
    <location>
        <begin position="3070"/>
        <end position="3114"/>
    </location>
</feature>
<feature type="repeat" description="LDL-receptor class B 27" evidence="6">
    <location>
        <begin position="3115"/>
        <end position="3157"/>
    </location>
</feature>
<feature type="repeat" description="HAT 8" evidence="3">
    <location>
        <begin position="3128"/>
        <end position="3171"/>
    </location>
</feature>
<feature type="repeat" description="LDL-receptor class B 28" evidence="6">
    <location>
        <begin position="3158"/>
        <end position="3201"/>
    </location>
</feature>
<feature type="repeat" description="LDL-receptor class B 29" evidence="6">
    <location>
        <begin position="3202"/>
        <end position="3244"/>
    </location>
</feature>
<feature type="repeat" description="HAT 9" evidence="3">
    <location>
        <begin position="3224"/>
        <end position="3256"/>
    </location>
</feature>
<feature type="repeat" description="LDL-receptor class B 30" evidence="6">
    <location>
        <begin position="3245"/>
        <end position="3285"/>
    </location>
</feature>
<feature type="domain" description="LDL-receptor class A 21" evidence="5">
    <location>
        <begin position="3334"/>
        <end position="3371"/>
    </location>
</feature>
<feature type="domain" description="LDL-receptor class A 22" evidence="5">
    <location>
        <begin position="3374"/>
        <end position="3410"/>
    </location>
</feature>
<feature type="domain" description="LDL-receptor class A 23" evidence="5">
    <location>
        <begin position="3413"/>
        <end position="3450"/>
    </location>
</feature>
<feature type="domain" description="LDL-receptor class A 24" evidence="5">
    <location>
        <begin position="3453"/>
        <end position="3491"/>
    </location>
</feature>
<feature type="domain" description="LDL-receptor class A 25" evidence="5">
    <location>
        <begin position="3494"/>
        <end position="3533"/>
    </location>
</feature>
<feature type="domain" description="LDL-receptor class A 26" evidence="5">
    <location>
        <begin position="3536"/>
        <end position="3572"/>
    </location>
</feature>
<feature type="domain" description="LDL-receptor class A 27" evidence="5">
    <location>
        <begin position="3575"/>
        <end position="3611"/>
    </location>
</feature>
<feature type="domain" description="LDL-receptor class A 28" evidence="5">
    <location>
        <begin position="3613"/>
        <end position="3649"/>
    </location>
</feature>
<feature type="domain" description="LDL-receptor class A 29" evidence="5">
    <location>
        <begin position="3654"/>
        <end position="3692"/>
    </location>
</feature>
<feature type="domain" description="LDL-receptor class A 30" evidence="5">
    <location>
        <begin position="3695"/>
        <end position="3733"/>
    </location>
</feature>
<feature type="domain" description="LDL-receptor class A 31" evidence="5">
    <location>
        <begin position="3741"/>
        <end position="3778"/>
    </location>
</feature>
<feature type="repeat" description="LDL-receptor class B 31" evidence="6">
    <location>
        <begin position="3913"/>
        <end position="3925"/>
    </location>
</feature>
<feature type="repeat" description="LDL-receptor class B 32" evidence="6">
    <location>
        <begin position="3971"/>
        <end position="4013"/>
    </location>
</feature>
<feature type="repeat" description="HAT 10" evidence="3">
    <location>
        <begin position="3995"/>
        <end position="4027"/>
    </location>
</feature>
<feature type="repeat" description="LDL-receptor class B 33" evidence="6">
    <location>
        <begin position="4014"/>
        <end position="4057"/>
    </location>
</feature>
<feature type="repeat" description="LDL-receptor class B 34" evidence="6">
    <location>
        <begin position="4058"/>
        <end position="4102"/>
    </location>
</feature>
<feature type="domain" description="EGF-like 2" evidence="4">
    <location>
        <begin position="4197"/>
        <end position="4230"/>
    </location>
</feature>
<feature type="domain" description="EGF-like 3" evidence="4">
    <location>
        <begin position="4233"/>
        <end position="4269"/>
    </location>
</feature>
<feature type="domain" description="EGF-like 4" evidence="4">
    <location>
        <begin position="4270"/>
        <end position="4302"/>
    </location>
</feature>
<feature type="domain" description="EGF-like 5" evidence="4">
    <location>
        <begin position="4305"/>
        <end position="4341"/>
    </location>
</feature>
<feature type="domain" description="EGF-like 6" evidence="4">
    <location>
        <begin position="4376"/>
        <end position="4410"/>
    </location>
</feature>
<feature type="region of interest" description="Interaction with MAFB" evidence="2">
    <location>
        <begin position="4446"/>
        <end position="4545"/>
    </location>
</feature>
<feature type="binding site" evidence="1">
    <location>
        <position position="872"/>
    </location>
    <ligand>
        <name>Ca(2+)</name>
        <dbReference type="ChEBI" id="CHEBI:29108"/>
        <label>1</label>
    </ligand>
</feature>
<feature type="binding site" evidence="1">
    <location>
        <position position="875"/>
    </location>
    <ligand>
        <name>Ca(2+)</name>
        <dbReference type="ChEBI" id="CHEBI:29108"/>
        <label>1</label>
    </ligand>
</feature>
<feature type="binding site" evidence="1">
    <location>
        <position position="877"/>
    </location>
    <ligand>
        <name>Ca(2+)</name>
        <dbReference type="ChEBI" id="CHEBI:29108"/>
        <label>1</label>
    </ligand>
</feature>
<feature type="binding site" evidence="1">
    <location>
        <position position="879"/>
    </location>
    <ligand>
        <name>Ca(2+)</name>
        <dbReference type="ChEBI" id="CHEBI:29108"/>
        <label>1</label>
    </ligand>
</feature>
<feature type="binding site" evidence="1">
    <location>
        <position position="885"/>
    </location>
    <ligand>
        <name>Ca(2+)</name>
        <dbReference type="ChEBI" id="CHEBI:29108"/>
        <label>1</label>
    </ligand>
</feature>
<feature type="binding site" evidence="1">
    <location>
        <position position="886"/>
    </location>
    <ligand>
        <name>Ca(2+)</name>
        <dbReference type="ChEBI" id="CHEBI:29108"/>
        <label>1</label>
    </ligand>
</feature>
<feature type="binding site" evidence="1">
    <location>
        <position position="1033"/>
    </location>
    <ligand>
        <name>Ca(2+)</name>
        <dbReference type="ChEBI" id="CHEBI:29108"/>
        <label>2</label>
    </ligand>
</feature>
<feature type="binding site" evidence="1">
    <location>
        <position position="1036"/>
    </location>
    <ligand>
        <name>Ca(2+)</name>
        <dbReference type="ChEBI" id="CHEBI:29108"/>
        <label>2</label>
    </ligand>
</feature>
<feature type="binding site" evidence="1">
    <location>
        <position position="1038"/>
    </location>
    <ligand>
        <name>Ca(2+)</name>
        <dbReference type="ChEBI" id="CHEBI:29108"/>
        <label>2</label>
    </ligand>
</feature>
<feature type="binding site" evidence="1">
    <location>
        <position position="1040"/>
    </location>
    <ligand>
        <name>Ca(2+)</name>
        <dbReference type="ChEBI" id="CHEBI:29108"/>
        <label>2</label>
    </ligand>
</feature>
<feature type="binding site" evidence="1">
    <location>
        <position position="1046"/>
    </location>
    <ligand>
        <name>Ca(2+)</name>
        <dbReference type="ChEBI" id="CHEBI:29108"/>
        <label>2</label>
    </ligand>
</feature>
<feature type="binding site" evidence="1">
    <location>
        <position position="1047"/>
    </location>
    <ligand>
        <name>Ca(2+)</name>
        <dbReference type="ChEBI" id="CHEBI:29108"/>
        <label>2</label>
    </ligand>
</feature>
<feature type="binding site" evidence="1">
    <location>
        <position position="1081"/>
    </location>
    <ligand>
        <name>Ca(2+)</name>
        <dbReference type="ChEBI" id="CHEBI:29108"/>
        <label>3</label>
    </ligand>
</feature>
<feature type="binding site" evidence="1">
    <location>
        <position position="1084"/>
    </location>
    <ligand>
        <name>Ca(2+)</name>
        <dbReference type="ChEBI" id="CHEBI:29108"/>
        <label>3</label>
    </ligand>
</feature>
<feature type="binding site" evidence="1">
    <location>
        <position position="1086"/>
    </location>
    <ligand>
        <name>Ca(2+)</name>
        <dbReference type="ChEBI" id="CHEBI:29108"/>
        <label>3</label>
    </ligand>
</feature>
<feature type="binding site" evidence="1">
    <location>
        <position position="1088"/>
    </location>
    <ligand>
        <name>Ca(2+)</name>
        <dbReference type="ChEBI" id="CHEBI:29108"/>
        <label>3</label>
    </ligand>
</feature>
<feature type="binding site" evidence="1">
    <location>
        <position position="1094"/>
    </location>
    <ligand>
        <name>Ca(2+)</name>
        <dbReference type="ChEBI" id="CHEBI:29108"/>
        <label>3</label>
    </ligand>
</feature>
<feature type="binding site" evidence="1">
    <location>
        <position position="1095"/>
    </location>
    <ligand>
        <name>Ca(2+)</name>
        <dbReference type="ChEBI" id="CHEBI:29108"/>
        <label>3</label>
    </ligand>
</feature>
<feature type="modified residue" description="N6-acetyllysine" evidence="2">
    <location>
        <position position="2010"/>
    </location>
</feature>
<feature type="modified residue" description="Phosphothreonine" evidence="1">
    <location>
        <position position="4461"/>
    </location>
</feature>
<feature type="modified residue" description="Phosphotyrosine" evidence="1">
    <location>
        <position position="4508"/>
    </location>
</feature>
<feature type="modified residue" description="Phosphoserine" evidence="1">
    <location>
        <position position="4518"/>
    </location>
</feature>
<feature type="modified residue" description="Phosphoserine" evidence="1">
    <location>
        <position position="4521"/>
    </location>
</feature>
<feature type="modified residue" description="Phosphoserine" evidence="2">
    <location>
        <position position="4524"/>
    </location>
</feature>
<feature type="glycosylation site" description="N-linked (GlcNAc...) asparagine" evidence="7">
    <location>
        <position position="115"/>
    </location>
</feature>
<feature type="glycosylation site" description="N-linked (GlcNAc...) asparagine" evidence="7">
    <location>
        <position position="137"/>
    </location>
</feature>
<feature type="glycosylation site" description="N-linked (GlcNAc...) asparagine" evidence="7">
    <location>
        <position position="186"/>
    </location>
</feature>
<feature type="glycosylation site" description="N-linked (GlcNAc...) asparagine" evidence="7">
    <location>
        <position position="240"/>
    </location>
</feature>
<feature type="glycosylation site" description="N-linked (GlcNAc...) asparagine" evidence="7">
    <location>
        <position position="275"/>
    </location>
</feature>
<feature type="glycosylation site" description="N-linked (GlcNAc...) asparagine" evidence="7">
    <location>
        <position position="358"/>
    </location>
</feature>
<feature type="glycosylation site" description="N-linked (GlcNAc...) asparagine" evidence="7">
    <location>
        <position position="447"/>
    </location>
</feature>
<feature type="glycosylation site" description="N-linked (GlcNAc...) asparagine" evidence="7">
    <location>
        <position position="730"/>
    </location>
</feature>
<feature type="glycosylation site" description="N-linked (GlcNAc...) asparagine" evidence="7">
    <location>
        <position position="929"/>
    </location>
</feature>
<feature type="glycosylation site" description="N-linked (GlcNAc...) asparagine" evidence="7">
    <location>
        <position position="1051"/>
    </location>
</feature>
<feature type="glycosylation site" description="N-linked (GlcNAc...) asparagine" evidence="7">
    <location>
        <position position="1156"/>
    </location>
</feature>
<feature type="glycosylation site" description="N-linked (GlcNAc...) asparagine" evidence="7">
    <location>
        <position position="1196"/>
    </location>
</feature>
<feature type="glycosylation site" description="N-linked (GlcNAc...) asparagine" evidence="7">
    <location>
        <position position="1219"/>
    </location>
</feature>
<feature type="glycosylation site" description="N-linked (GlcNAc...) asparagine" evidence="7">
    <location>
        <position position="1512"/>
    </location>
</feature>
<feature type="glycosylation site" description="N-linked (GlcNAc...) asparagine" evidence="7">
    <location>
        <position position="1559"/>
    </location>
</feature>
<feature type="glycosylation site" description="N-linked (GlcNAc...) asparagine" evidence="7">
    <location>
        <position position="1576"/>
    </location>
</feature>
<feature type="glycosylation site" description="N-linked (GlcNAc...) asparagine" evidence="7">
    <location>
        <position position="1617"/>
    </location>
</feature>
<feature type="glycosylation site" description="N-linked (GlcNAc...) asparagine" evidence="7">
    <location>
        <position position="1646"/>
    </location>
</feature>
<feature type="glycosylation site" description="N-linked (GlcNAc...) asparagine" evidence="7">
    <location>
        <position position="1724"/>
    </location>
</feature>
<feature type="glycosylation site" description="N-linked (GlcNAc...) asparagine" evidence="7">
    <location>
        <position position="1734"/>
    </location>
</feature>
<feature type="glycosylation site" description="N-linked (GlcNAc...) asparagine" evidence="7">
    <location>
        <position position="1764"/>
    </location>
</feature>
<feature type="glycosylation site" description="N-linked (GlcNAc...) asparagine" evidence="7">
    <location>
        <position position="1826"/>
    </location>
</feature>
<feature type="glycosylation site" description="N-linked (GlcNAc...) asparagine" evidence="7">
    <location>
        <position position="1934"/>
    </location>
</feature>
<feature type="glycosylation site" description="N-linked (GlcNAc...) asparagine" evidence="7">
    <location>
        <position position="1996"/>
    </location>
</feature>
<feature type="glycosylation site" description="N-linked (GlcNAc...) asparagine" evidence="7">
    <location>
        <position position="2049"/>
    </location>
</feature>
<feature type="glycosylation site" description="N-linked (GlcNAc...) asparagine" evidence="7">
    <location>
        <position position="2118"/>
    </location>
</feature>
<feature type="glycosylation site" description="N-linked (GlcNAc...) asparagine" evidence="7">
    <location>
        <position position="2128"/>
    </location>
</feature>
<feature type="glycosylation site" description="N-linked (GlcNAc...) asparagine" evidence="7">
    <location>
        <position position="2473"/>
    </location>
</feature>
<feature type="glycosylation site" description="N-linked (GlcNAc...) asparagine" evidence="7">
    <location>
        <position position="2503"/>
    </location>
</feature>
<feature type="glycosylation site" description="N-linked (GlcNAc...) asparagine" evidence="7">
    <location>
        <position position="2522"/>
    </location>
</feature>
<feature type="glycosylation site" description="N-linked (GlcNAc...) asparagine" evidence="7">
    <location>
        <position position="2602"/>
    </location>
</feature>
<feature type="glycosylation site" description="N-linked (GlcNAc...) asparagine" evidence="7">
    <location>
        <position position="2621"/>
    </location>
</feature>
<feature type="glycosylation site" description="N-linked (GlcNAc...) asparagine" evidence="7">
    <location>
        <position position="2639"/>
    </location>
</feature>
<feature type="glycosylation site" description="N-linked (GlcNAc...) asparagine" evidence="7">
    <location>
        <position position="2816"/>
    </location>
</feature>
<feature type="glycosylation site" description="N-linked (GlcNAc...) asparagine" evidence="7">
    <location>
        <position position="2906"/>
    </location>
</feature>
<feature type="glycosylation site" description="N-linked (GlcNAc...) asparagine" evidence="7">
    <location>
        <position position="3049"/>
    </location>
</feature>
<feature type="glycosylation site" description="N-linked (GlcNAc...) asparagine" evidence="7">
    <location>
        <position position="3090"/>
    </location>
</feature>
<feature type="glycosylation site" description="N-linked (GlcNAc...) asparagine" evidence="7">
    <location>
        <position position="3265"/>
    </location>
</feature>
<feature type="glycosylation site" description="N-linked (GlcNAc...) asparagine" evidence="7">
    <location>
        <position position="3334"/>
    </location>
</feature>
<feature type="glycosylation site" description="N-linked (GlcNAc...) asparagine" evidence="7">
    <location>
        <position position="3489"/>
    </location>
</feature>
<feature type="glycosylation site" description="N-linked (GlcNAc...) asparagine" evidence="7">
    <location>
        <position position="3663"/>
    </location>
</feature>
<feature type="glycosylation site" description="N-linked (GlcNAc...) asparagine" evidence="7">
    <location>
        <position position="3789"/>
    </location>
</feature>
<feature type="glycosylation site" description="N-linked (GlcNAc...) asparagine" evidence="7">
    <location>
        <position position="3840"/>
    </location>
</feature>
<feature type="glycosylation site" description="N-linked (GlcNAc...) asparagine" evidence="7">
    <location>
        <position position="3954"/>
    </location>
</feature>
<feature type="glycosylation site" description="N-linked (GlcNAc...) asparagine" evidence="7">
    <location>
        <position position="4076"/>
    </location>
</feature>
<feature type="glycosylation site" description="N-linked (GlcNAc...) asparagine" evidence="7">
    <location>
        <position position="4126"/>
    </location>
</feature>
<feature type="glycosylation site" description="N-linked (GlcNAc...) asparagine" evidence="7">
    <location>
        <position position="4180"/>
    </location>
</feature>
<feature type="glycosylation site" description="N-linked (GlcNAc...) asparagine" evidence="7">
    <location>
        <position position="4280"/>
    </location>
</feature>
<feature type="glycosylation site" description="N-linked (GlcNAc...) asparagine" evidence="7">
    <location>
        <position position="4365"/>
    </location>
</feature>
<feature type="disulfide bond" evidence="5">
    <location>
        <begin position="28"/>
        <end position="41"/>
    </location>
</feature>
<feature type="disulfide bond" evidence="5">
    <location>
        <begin position="35"/>
        <end position="54"/>
    </location>
</feature>
<feature type="disulfide bond" evidence="5">
    <location>
        <begin position="48"/>
        <end position="65"/>
    </location>
</feature>
<feature type="disulfide bond" evidence="5">
    <location>
        <begin position="73"/>
        <end position="86"/>
    </location>
</feature>
<feature type="disulfide bond" evidence="5">
    <location>
        <begin position="80"/>
        <end position="99"/>
    </location>
</feature>
<feature type="disulfide bond" evidence="5">
    <location>
        <begin position="93"/>
        <end position="109"/>
    </location>
</feature>
<feature type="disulfide bond" evidence="5">
    <location>
        <begin position="855"/>
        <end position="867"/>
    </location>
</feature>
<feature type="disulfide bond" evidence="5">
    <location>
        <begin position="862"/>
        <end position="880"/>
    </location>
</feature>
<feature type="disulfide bond" evidence="5">
    <location>
        <begin position="874"/>
        <end position="891"/>
    </location>
</feature>
<feature type="disulfide bond" evidence="5">
    <location>
        <begin position="896"/>
        <end position="908"/>
    </location>
</feature>
<feature type="disulfide bond" evidence="5">
    <location>
        <begin position="903"/>
        <end position="921"/>
    </location>
</feature>
<feature type="disulfide bond" evidence="5">
    <location>
        <begin position="915"/>
        <end position="932"/>
    </location>
</feature>
<feature type="disulfide bond" evidence="5">
    <location>
        <begin position="937"/>
        <end position="949"/>
    </location>
</feature>
<feature type="disulfide bond" evidence="5">
    <location>
        <begin position="944"/>
        <end position="962"/>
    </location>
</feature>
<feature type="disulfide bond" evidence="5">
    <location>
        <begin position="956"/>
        <end position="972"/>
    </location>
</feature>
<feature type="disulfide bond" evidence="5">
    <location>
        <begin position="977"/>
        <end position="990"/>
    </location>
</feature>
<feature type="disulfide bond" evidence="5">
    <location>
        <begin position="985"/>
        <end position="1003"/>
    </location>
</feature>
<feature type="disulfide bond" evidence="5">
    <location>
        <begin position="997"/>
        <end position="1012"/>
    </location>
</feature>
<feature type="disulfide bond" evidence="5">
    <location>
        <begin position="1016"/>
        <end position="1028"/>
    </location>
</feature>
<feature type="disulfide bond" evidence="5">
    <location>
        <begin position="1023"/>
        <end position="1041"/>
    </location>
</feature>
<feature type="disulfide bond" evidence="5">
    <location>
        <begin position="1035"/>
        <end position="1052"/>
    </location>
</feature>
<feature type="disulfide bond" evidence="5">
    <location>
        <begin position="1063"/>
        <end position="1076"/>
    </location>
</feature>
<feature type="disulfide bond" evidence="5">
    <location>
        <begin position="1070"/>
        <end position="1089"/>
    </location>
</feature>
<feature type="disulfide bond" evidence="5">
    <location>
        <begin position="1083"/>
        <end position="1098"/>
    </location>
</feature>
<feature type="disulfide bond" evidence="5">
    <location>
        <begin position="1105"/>
        <end position="1119"/>
    </location>
</feature>
<feature type="disulfide bond" evidence="5">
    <location>
        <begin position="1113"/>
        <end position="1132"/>
    </location>
</feature>
<feature type="disulfide bond" evidence="5">
    <location>
        <begin position="1126"/>
        <end position="1141"/>
    </location>
</feature>
<feature type="disulfide bond" evidence="5">
    <location>
        <begin position="1146"/>
        <end position="1160"/>
    </location>
</feature>
<feature type="disulfide bond" evidence="5">
    <location>
        <begin position="1153"/>
        <end position="1173"/>
    </location>
</feature>
<feature type="disulfide bond" evidence="5">
    <location>
        <begin position="1167"/>
        <end position="1183"/>
    </location>
</feature>
<feature type="disulfide bond" evidence="5">
    <location>
        <begin position="2525"/>
        <end position="2538"/>
    </location>
</feature>
<feature type="disulfide bond" evidence="5">
    <location>
        <begin position="2533"/>
        <end position="2551"/>
    </location>
</feature>
<feature type="disulfide bond" evidence="5">
    <location>
        <begin position="2545"/>
        <end position="2562"/>
    </location>
</feature>
<feature type="disulfide bond" evidence="5">
    <location>
        <begin position="2567"/>
        <end position="2579"/>
    </location>
</feature>
<feature type="disulfide bond" evidence="5">
    <location>
        <begin position="2574"/>
        <end position="2592"/>
    </location>
</feature>
<feature type="disulfide bond" evidence="5">
    <location>
        <begin position="2586"/>
        <end position="2601"/>
    </location>
</feature>
<feature type="disulfide bond" evidence="5">
    <location>
        <begin position="2606"/>
        <end position="2618"/>
    </location>
</feature>
<feature type="disulfide bond" evidence="5">
    <location>
        <begin position="2613"/>
        <end position="2631"/>
    </location>
</feature>
<feature type="disulfide bond" evidence="5">
    <location>
        <begin position="2625"/>
        <end position="2640"/>
    </location>
</feature>
<feature type="disulfide bond" evidence="5">
    <location>
        <begin position="2640"/>
        <end position="2667"/>
    </location>
</feature>
<feature type="disulfide bond" evidence="5">
    <location>
        <begin position="2645"/>
        <end position="2680"/>
    </location>
</feature>
<feature type="disulfide bond" evidence="5">
    <location>
        <begin position="2674"/>
        <end position="2689"/>
    </location>
</feature>
<feature type="disulfide bond" evidence="5">
    <location>
        <begin position="2697"/>
        <end position="2709"/>
    </location>
</feature>
<feature type="disulfide bond" evidence="5">
    <location>
        <begin position="2704"/>
        <end position="2722"/>
    </location>
</feature>
<feature type="disulfide bond" evidence="5">
    <location>
        <begin position="2716"/>
        <end position="2731"/>
    </location>
</feature>
<feature type="disulfide bond" evidence="5">
    <location>
        <begin position="2735"/>
        <end position="2747"/>
    </location>
</feature>
<feature type="disulfide bond" evidence="5">
    <location>
        <begin position="2742"/>
        <end position="2760"/>
    </location>
</feature>
<feature type="disulfide bond" evidence="5">
    <location>
        <begin position="2754"/>
        <end position="2770"/>
    </location>
</feature>
<feature type="disulfide bond" evidence="5">
    <location>
        <begin position="2775"/>
        <end position="2788"/>
    </location>
</feature>
<feature type="disulfide bond" evidence="5">
    <location>
        <begin position="2782"/>
        <end position="2801"/>
    </location>
</feature>
<feature type="disulfide bond" evidence="5">
    <location>
        <begin position="2795"/>
        <end position="2813"/>
    </location>
</feature>
<feature type="disulfide bond" evidence="5">
    <location>
        <begin position="2819"/>
        <end position="2831"/>
    </location>
</feature>
<feature type="disulfide bond" evidence="5">
    <location>
        <begin position="2826"/>
        <end position="2844"/>
    </location>
</feature>
<feature type="disulfide bond" evidence="5">
    <location>
        <begin position="2838"/>
        <end position="2854"/>
    </location>
</feature>
<feature type="disulfide bond" evidence="5">
    <location>
        <begin position="2859"/>
        <end position="2871"/>
    </location>
</feature>
<feature type="disulfide bond" evidence="5">
    <location>
        <begin position="2866"/>
        <end position="2885"/>
    </location>
</feature>
<feature type="disulfide bond" evidence="5">
    <location>
        <begin position="2879"/>
        <end position="2898"/>
    </location>
</feature>
<feature type="disulfide bond" evidence="5">
    <location>
        <begin position="2905"/>
        <end position="2918"/>
    </location>
</feature>
<feature type="disulfide bond" evidence="5">
    <location>
        <begin position="2913"/>
        <end position="2931"/>
    </location>
</feature>
<feature type="disulfide bond" evidence="5">
    <location>
        <begin position="2925"/>
        <end position="2940"/>
    </location>
</feature>
<feature type="disulfide bond" evidence="4">
    <location>
        <begin position="2987"/>
        <end position="2997"/>
    </location>
</feature>
<feature type="disulfide bond" evidence="4">
    <location>
        <begin position="2993"/>
        <end position="3006"/>
    </location>
</feature>
<feature type="disulfide bond" evidence="5">
    <location>
        <begin position="3335"/>
        <end position="3347"/>
    </location>
</feature>
<feature type="disulfide bond" evidence="5">
    <location>
        <begin position="3342"/>
        <end position="3360"/>
    </location>
</feature>
<feature type="disulfide bond" evidence="5">
    <location>
        <begin position="3354"/>
        <end position="3370"/>
    </location>
</feature>
<feature type="disulfide bond" evidence="5">
    <location>
        <begin position="3375"/>
        <end position="3387"/>
    </location>
</feature>
<feature type="disulfide bond" evidence="5">
    <location>
        <begin position="3382"/>
        <end position="3400"/>
    </location>
</feature>
<feature type="disulfide bond" evidence="5">
    <location>
        <begin position="3394"/>
        <end position="3409"/>
    </location>
</feature>
<feature type="disulfide bond" evidence="5">
    <location>
        <begin position="3414"/>
        <end position="3427"/>
    </location>
</feature>
<feature type="disulfide bond" evidence="5">
    <location>
        <begin position="3421"/>
        <end position="3440"/>
    </location>
</feature>
<feature type="disulfide bond" evidence="5">
    <location>
        <begin position="3434"/>
        <end position="3449"/>
    </location>
</feature>
<feature type="disulfide bond" evidence="5">
    <location>
        <begin position="3454"/>
        <end position="3467"/>
    </location>
</feature>
<feature type="disulfide bond" evidence="5">
    <location>
        <begin position="3461"/>
        <end position="3480"/>
    </location>
</feature>
<feature type="disulfide bond" evidence="5">
    <location>
        <begin position="3474"/>
        <end position="3490"/>
    </location>
</feature>
<feature type="disulfide bond" evidence="5">
    <location>
        <begin position="3495"/>
        <end position="3508"/>
    </location>
</feature>
<feature type="disulfide bond" evidence="5">
    <location>
        <begin position="3502"/>
        <end position="3521"/>
    </location>
</feature>
<feature type="disulfide bond" evidence="5">
    <location>
        <begin position="3515"/>
        <end position="3532"/>
    </location>
</feature>
<feature type="disulfide bond" evidence="5">
    <location>
        <begin position="3537"/>
        <end position="3549"/>
    </location>
</feature>
<feature type="disulfide bond" evidence="5">
    <location>
        <begin position="3544"/>
        <end position="3562"/>
    </location>
</feature>
<feature type="disulfide bond" evidence="5">
    <location>
        <begin position="3556"/>
        <end position="3571"/>
    </location>
</feature>
<feature type="disulfide bond" evidence="5">
    <location>
        <begin position="3576"/>
        <end position="3588"/>
    </location>
</feature>
<feature type="disulfide bond" evidence="5">
    <location>
        <begin position="3583"/>
        <end position="3601"/>
    </location>
</feature>
<feature type="disulfide bond" evidence="5">
    <location>
        <begin position="3595"/>
        <end position="3610"/>
    </location>
</feature>
<feature type="disulfide bond" evidence="5">
    <location>
        <begin position="3614"/>
        <end position="3626"/>
    </location>
</feature>
<feature type="disulfide bond" evidence="5">
    <location>
        <begin position="3621"/>
        <end position="3639"/>
    </location>
</feature>
<feature type="disulfide bond" evidence="5">
    <location>
        <begin position="3633"/>
        <end position="3648"/>
    </location>
</feature>
<feature type="disulfide bond" evidence="5">
    <location>
        <begin position="3655"/>
        <end position="3667"/>
    </location>
</feature>
<feature type="disulfide bond" evidence="5">
    <location>
        <begin position="3662"/>
        <end position="3680"/>
    </location>
</feature>
<feature type="disulfide bond" evidence="5">
    <location>
        <begin position="3674"/>
        <end position="3691"/>
    </location>
</feature>
<feature type="disulfide bond" evidence="5">
    <location>
        <begin position="3696"/>
        <end position="3710"/>
    </location>
</feature>
<feature type="disulfide bond" evidence="5">
    <location>
        <begin position="3704"/>
        <end position="3723"/>
    </location>
</feature>
<feature type="disulfide bond" evidence="5">
    <location>
        <begin position="3717"/>
        <end position="3732"/>
    </location>
</feature>
<feature type="disulfide bond" evidence="5">
    <location>
        <begin position="3742"/>
        <end position="3755"/>
    </location>
</feature>
<feature type="disulfide bond" evidence="5">
    <location>
        <begin position="3750"/>
        <end position="3768"/>
    </location>
</feature>
<feature type="disulfide bond" evidence="5">
    <location>
        <begin position="3762"/>
        <end position="3777"/>
    </location>
</feature>
<feature type="disulfide bond" evidence="4">
    <location>
        <begin position="4201"/>
        <end position="4211"/>
    </location>
</feature>
<feature type="disulfide bond" evidence="4">
    <location>
        <begin position="4205"/>
        <end position="4221"/>
    </location>
</feature>
<feature type="disulfide bond" evidence="4">
    <location>
        <begin position="4237"/>
        <end position="4247"/>
    </location>
</feature>
<feature type="disulfide bond" evidence="4">
    <location>
        <begin position="4241"/>
        <end position="4257"/>
    </location>
</feature>
<feature type="disulfide bond" evidence="4">
    <location>
        <begin position="4259"/>
        <end position="4268"/>
    </location>
</feature>
<feature type="disulfide bond" evidence="4">
    <location>
        <begin position="4273"/>
        <end position="4283"/>
    </location>
</feature>
<feature type="disulfide bond" evidence="4">
    <location>
        <begin position="4277"/>
        <end position="4293"/>
    </location>
</feature>
<feature type="disulfide bond" evidence="4">
    <location>
        <begin position="4309"/>
        <end position="4319"/>
    </location>
</feature>
<feature type="disulfide bond" evidence="4">
    <location>
        <begin position="4313"/>
        <end position="4329"/>
    </location>
</feature>
<feature type="disulfide bond" evidence="4">
    <location>
        <begin position="4331"/>
        <end position="4340"/>
    </location>
</feature>
<feature type="disulfide bond" evidence="4">
    <location>
        <begin position="4378"/>
        <end position="4388"/>
    </location>
</feature>
<feature type="disulfide bond" evidence="4">
    <location>
        <begin position="4382"/>
        <end position="4398"/>
    </location>
</feature>
<feature type="disulfide bond" evidence="4">
    <location>
        <begin position="4400"/>
        <end position="4409"/>
    </location>
</feature>
<reference key="1">
    <citation type="journal article" date="2004" name="Nature">
        <title>Genome sequence of the Brown Norway rat yields insights into mammalian evolution.</title>
        <authorList>
            <person name="Gibbs R.A."/>
            <person name="Weinstock G.M."/>
            <person name="Metzker M.L."/>
            <person name="Muzny D.M."/>
            <person name="Sodergren E.J."/>
            <person name="Scherer S."/>
            <person name="Scott G."/>
            <person name="Steffen D."/>
            <person name="Worley K.C."/>
            <person name="Burch P.E."/>
            <person name="Okwuonu G."/>
            <person name="Hines S."/>
            <person name="Lewis L."/>
            <person name="Deramo C."/>
            <person name="Delgado O."/>
            <person name="Dugan-Rocha S."/>
            <person name="Miner G."/>
            <person name="Morgan M."/>
            <person name="Hawes A."/>
            <person name="Gill R."/>
            <person name="Holt R.A."/>
            <person name="Adams M.D."/>
            <person name="Amanatides P.G."/>
            <person name="Baden-Tillson H."/>
            <person name="Barnstead M."/>
            <person name="Chin S."/>
            <person name="Evans C.A."/>
            <person name="Ferriera S."/>
            <person name="Fosler C."/>
            <person name="Glodek A."/>
            <person name="Gu Z."/>
            <person name="Jennings D."/>
            <person name="Kraft C.L."/>
            <person name="Nguyen T."/>
            <person name="Pfannkoch C.M."/>
            <person name="Sitter C."/>
            <person name="Sutton G.G."/>
            <person name="Venter J.C."/>
            <person name="Woodage T."/>
            <person name="Smith D."/>
            <person name="Lee H.-M."/>
            <person name="Gustafson E."/>
            <person name="Cahill P."/>
            <person name="Kana A."/>
            <person name="Doucette-Stamm L."/>
            <person name="Weinstock K."/>
            <person name="Fechtel K."/>
            <person name="Weiss R.B."/>
            <person name="Dunn D.M."/>
            <person name="Green E.D."/>
            <person name="Blakesley R.W."/>
            <person name="Bouffard G.G."/>
            <person name="De Jong P.J."/>
            <person name="Osoegawa K."/>
            <person name="Zhu B."/>
            <person name="Marra M."/>
            <person name="Schein J."/>
            <person name="Bosdet I."/>
            <person name="Fjell C."/>
            <person name="Jones S."/>
            <person name="Krzywinski M."/>
            <person name="Mathewson C."/>
            <person name="Siddiqui A."/>
            <person name="Wye N."/>
            <person name="McPherson J."/>
            <person name="Zhao S."/>
            <person name="Fraser C.M."/>
            <person name="Shetty J."/>
            <person name="Shatsman S."/>
            <person name="Geer K."/>
            <person name="Chen Y."/>
            <person name="Abramzon S."/>
            <person name="Nierman W.C."/>
            <person name="Havlak P.H."/>
            <person name="Chen R."/>
            <person name="Durbin K.J."/>
            <person name="Egan A."/>
            <person name="Ren Y."/>
            <person name="Song X.-Z."/>
            <person name="Li B."/>
            <person name="Liu Y."/>
            <person name="Qin X."/>
            <person name="Cawley S."/>
            <person name="Cooney A.J."/>
            <person name="D'Souza L.M."/>
            <person name="Martin K."/>
            <person name="Wu J.Q."/>
            <person name="Gonzalez-Garay M.L."/>
            <person name="Jackson A.R."/>
            <person name="Kalafus K.J."/>
            <person name="McLeod M.P."/>
            <person name="Milosavljevic A."/>
            <person name="Virk D."/>
            <person name="Volkov A."/>
            <person name="Wheeler D.A."/>
            <person name="Zhang Z."/>
            <person name="Bailey J.A."/>
            <person name="Eichler E.E."/>
            <person name="Tuzun E."/>
            <person name="Birney E."/>
            <person name="Mongin E."/>
            <person name="Ureta-Vidal A."/>
            <person name="Woodwark C."/>
            <person name="Zdobnov E."/>
            <person name="Bork P."/>
            <person name="Suyama M."/>
            <person name="Torrents D."/>
            <person name="Alexandersson M."/>
            <person name="Trask B.J."/>
            <person name="Young J.M."/>
            <person name="Huang H."/>
            <person name="Wang H."/>
            <person name="Xing H."/>
            <person name="Daniels S."/>
            <person name="Gietzen D."/>
            <person name="Schmidt J."/>
            <person name="Stevens K."/>
            <person name="Vitt U."/>
            <person name="Wingrove J."/>
            <person name="Camara F."/>
            <person name="Mar Alba M."/>
            <person name="Abril J.F."/>
            <person name="Guigo R."/>
            <person name="Smit A."/>
            <person name="Dubchak I."/>
            <person name="Rubin E.M."/>
            <person name="Couronne O."/>
            <person name="Poliakov A."/>
            <person name="Huebner N."/>
            <person name="Ganten D."/>
            <person name="Goesele C."/>
            <person name="Hummel O."/>
            <person name="Kreitler T."/>
            <person name="Lee Y.-A."/>
            <person name="Monti J."/>
            <person name="Schulz H."/>
            <person name="Zimdahl H."/>
            <person name="Himmelbauer H."/>
            <person name="Lehrach H."/>
            <person name="Jacob H.J."/>
            <person name="Bromberg S."/>
            <person name="Gullings-Handley J."/>
            <person name="Jensen-Seaman M.I."/>
            <person name="Kwitek A.E."/>
            <person name="Lazar J."/>
            <person name="Pasko D."/>
            <person name="Tonellato P.J."/>
            <person name="Twigger S."/>
            <person name="Ponting C.P."/>
            <person name="Duarte J.M."/>
            <person name="Rice S."/>
            <person name="Goodstadt L."/>
            <person name="Beatson S.A."/>
            <person name="Emes R.D."/>
            <person name="Winter E.E."/>
            <person name="Webber C."/>
            <person name="Brandt P."/>
            <person name="Nyakatura G."/>
            <person name="Adetobi M."/>
            <person name="Chiaromonte F."/>
            <person name="Elnitski L."/>
            <person name="Eswara P."/>
            <person name="Hardison R.C."/>
            <person name="Hou M."/>
            <person name="Kolbe D."/>
            <person name="Makova K."/>
            <person name="Miller W."/>
            <person name="Nekrutenko A."/>
            <person name="Riemer C."/>
            <person name="Schwartz S."/>
            <person name="Taylor J."/>
            <person name="Yang S."/>
            <person name="Zhang Y."/>
            <person name="Lindpaintner K."/>
            <person name="Andrews T.D."/>
            <person name="Caccamo M."/>
            <person name="Clamp M."/>
            <person name="Clarke L."/>
            <person name="Curwen V."/>
            <person name="Durbin R.M."/>
            <person name="Eyras E."/>
            <person name="Searle S.M."/>
            <person name="Cooper G.M."/>
            <person name="Batzoglou S."/>
            <person name="Brudno M."/>
            <person name="Sidow A."/>
            <person name="Stone E.A."/>
            <person name="Payseur B.A."/>
            <person name="Bourque G."/>
            <person name="Lopez-Otin C."/>
            <person name="Puente X.S."/>
            <person name="Chakrabarti K."/>
            <person name="Chatterji S."/>
            <person name="Dewey C."/>
            <person name="Pachter L."/>
            <person name="Bray N."/>
            <person name="Yap V.B."/>
            <person name="Caspi A."/>
            <person name="Tesler G."/>
            <person name="Pevzner P.A."/>
            <person name="Haussler D."/>
            <person name="Roskin K.M."/>
            <person name="Baertsch R."/>
            <person name="Clawson H."/>
            <person name="Furey T.S."/>
            <person name="Hinrichs A.S."/>
            <person name="Karolchik D."/>
            <person name="Kent W.J."/>
            <person name="Rosenbloom K.R."/>
            <person name="Trumbower H."/>
            <person name="Weirauch M."/>
            <person name="Cooper D.N."/>
            <person name="Stenson P.D."/>
            <person name="Ma B."/>
            <person name="Brent M."/>
            <person name="Arumugam M."/>
            <person name="Shteynberg D."/>
            <person name="Copley R.R."/>
            <person name="Taylor M.S."/>
            <person name="Riethman H."/>
            <person name="Mudunuri U."/>
            <person name="Peterson J."/>
            <person name="Guyer M."/>
            <person name="Felsenfeld A."/>
            <person name="Old S."/>
            <person name="Mockrin S."/>
            <person name="Collins F.S."/>
        </authorList>
    </citation>
    <scope>NUCLEOTIDE SEQUENCE [LARGE SCALE GENOMIC DNA]</scope>
    <source>
        <strain>Brown Norway</strain>
    </source>
</reference>
<reference key="2">
    <citation type="submission" date="2005-09" db="EMBL/GenBank/DDBJ databases">
        <authorList>
            <person name="Mural R.J."/>
            <person name="Adams M.D."/>
            <person name="Myers E.W."/>
            <person name="Smith H.O."/>
            <person name="Venter J.C."/>
        </authorList>
    </citation>
    <scope>NUCLEOTIDE SEQUENCE [LARGE SCALE GENOMIC DNA]</scope>
    <source>
        <strain evidence="11">Brown Norway</strain>
    </source>
</reference>
<reference key="3">
    <citation type="journal article" date="2004" name="Genome Res.">
        <title>The status, quality, and expansion of the NIH full-length cDNA project: the Mammalian Gene Collection (MGC).</title>
        <authorList>
            <consortium name="The MGC Project Team"/>
        </authorList>
    </citation>
    <scope>NUCLEOTIDE SEQUENCE [LARGE SCALE MRNA] OF 4274-4545</scope>
    <source>
        <tissue evidence="10">Spleen</tissue>
    </source>
</reference>
<reference key="4">
    <citation type="journal article" date="2012" name="Nat. Commun.">
        <title>Quantitative maps of protein phosphorylation sites across 14 different rat organs and tissues.</title>
        <authorList>
            <person name="Lundby A."/>
            <person name="Secher A."/>
            <person name="Lage K."/>
            <person name="Nordsborg N.B."/>
            <person name="Dmytriyev A."/>
            <person name="Lundby C."/>
            <person name="Olsen J.V."/>
        </authorList>
    </citation>
    <scope>IDENTIFICATION BY MASS SPECTROMETRY [LARGE SCALE ANALYSIS]</scope>
</reference>
<reference key="5">
    <citation type="journal article" date="2013" name="J. Proteome Res.">
        <title>Site-specific glycan-peptide analysis for determination of N-glycoproteome heterogeneity.</title>
        <authorList>
            <person name="Parker B.L."/>
            <person name="Thaysen-Andersen M."/>
            <person name="Solis N."/>
            <person name="Scott N.E."/>
            <person name="Larsen M.R."/>
            <person name="Graham M.E."/>
            <person name="Packer N.H."/>
            <person name="Cordwell S.J."/>
        </authorList>
    </citation>
    <scope>IDENTIFICATION BY MASS SPECTROMETRY [LARGE SCALE ANALYSIS]</scope>
</reference>
<reference key="6">
    <citation type="journal article" date="2019" name="Cell">
        <title>The Golgi outpost protein TPPP nucleates microtubules and is critical for myelination.</title>
        <authorList>
            <person name="Fu M.M."/>
            <person name="McAlear T.S."/>
            <person name="Nguyen H."/>
            <person name="Oses-Prieto J.A."/>
            <person name="Valenzuela A."/>
            <person name="Shi R.D."/>
            <person name="Perrino J.J."/>
            <person name="Huang T.T."/>
            <person name="Burlingame A.L."/>
            <person name="Bechstedt S."/>
            <person name="Barres B.A."/>
        </authorList>
    </citation>
    <scope>SUBCELLULAR LOCATION</scope>
</reference>
<dbReference type="EMBL" id="AABR07057430">
    <property type="status" value="NOT_ANNOTATED_CDS"/>
    <property type="molecule type" value="Genomic_DNA"/>
</dbReference>
<dbReference type="EMBL" id="AABR07057431">
    <property type="status" value="NOT_ANNOTATED_CDS"/>
    <property type="molecule type" value="Genomic_DNA"/>
</dbReference>
<dbReference type="EMBL" id="CH473950">
    <property type="protein sequence ID" value="EDM16460.1"/>
    <property type="molecule type" value="Genomic_DNA"/>
</dbReference>
<dbReference type="EMBL" id="BC088327">
    <property type="protein sequence ID" value="AAH88327.1"/>
    <property type="molecule type" value="mRNA"/>
</dbReference>
<dbReference type="RefSeq" id="NP_001123962.1">
    <property type="nucleotide sequence ID" value="NM_001130490.1"/>
</dbReference>
<dbReference type="SMR" id="G3V928"/>
<dbReference type="ComplexPortal" id="CPX-4462">
    <property type="entry name" value="Prolow-density lipoprotein receptor-related protein 1 complex"/>
</dbReference>
<dbReference type="FunCoup" id="G3V928">
    <property type="interactions" value="1083"/>
</dbReference>
<dbReference type="IntAct" id="G3V928">
    <property type="interactions" value="3"/>
</dbReference>
<dbReference type="STRING" id="10116.ENSRNOP00000034210"/>
<dbReference type="GlyCosmos" id="G3V928">
    <property type="glycosylation" value="49 sites, 14 glycans"/>
</dbReference>
<dbReference type="GlyGen" id="G3V928">
    <property type="glycosylation" value="50 sites, 14 N-linked glycans (11 sites)"/>
</dbReference>
<dbReference type="iPTMnet" id="G3V928"/>
<dbReference type="PhosphoSitePlus" id="G3V928"/>
<dbReference type="PaxDb" id="10116-ENSRNOP00000034210"/>
<dbReference type="Ensembl" id="ENSRNOT00000031005.6">
    <property type="protein sequence ID" value="ENSRNOP00000034210.4"/>
    <property type="gene ID" value="ENSRNOG00000025053.6"/>
</dbReference>
<dbReference type="GeneID" id="299858"/>
<dbReference type="KEGG" id="rno:299858"/>
<dbReference type="AGR" id="RGD:1307535"/>
<dbReference type="CTD" id="4035"/>
<dbReference type="RGD" id="1307535">
    <property type="gene designation" value="Lrp1"/>
</dbReference>
<dbReference type="eggNOG" id="KOG1215">
    <property type="taxonomic scope" value="Eukaryota"/>
</dbReference>
<dbReference type="GeneTree" id="ENSGT00940000157899"/>
<dbReference type="HOGENOM" id="CLU_000085_1_0_1"/>
<dbReference type="InParanoid" id="G3V928"/>
<dbReference type="OrthoDB" id="10066840at2759"/>
<dbReference type="TreeFam" id="TF315253"/>
<dbReference type="Reactome" id="R-RNO-2168880">
    <property type="pathway name" value="Scavenging of heme from plasma"/>
</dbReference>
<dbReference type="Reactome" id="R-RNO-975634">
    <property type="pathway name" value="Retinoid metabolism and transport"/>
</dbReference>
<dbReference type="PRO" id="PR:G3V928"/>
<dbReference type="Proteomes" id="UP000002494">
    <property type="component" value="Chromosome 7"/>
</dbReference>
<dbReference type="Proteomes" id="UP000234681">
    <property type="component" value="Chromosome 7"/>
</dbReference>
<dbReference type="Bgee" id="ENSRNOG00000025053">
    <property type="expression patterns" value="Expressed in liver and 19 other cell types or tissues"/>
</dbReference>
<dbReference type="GO" id="GO:0045177">
    <property type="term" value="C:apical part of cell"/>
    <property type="evidence" value="ECO:0000314"/>
    <property type="project" value="RGD"/>
</dbReference>
<dbReference type="GO" id="GO:0044295">
    <property type="term" value="C:axonal growth cone"/>
    <property type="evidence" value="ECO:0000314"/>
    <property type="project" value="RGD"/>
</dbReference>
<dbReference type="GO" id="GO:0016323">
    <property type="term" value="C:basolateral plasma membrane"/>
    <property type="evidence" value="ECO:0000266"/>
    <property type="project" value="RGD"/>
</dbReference>
<dbReference type="GO" id="GO:0005905">
    <property type="term" value="C:clathrin-coated pit"/>
    <property type="evidence" value="ECO:0007669"/>
    <property type="project" value="UniProtKB-KW"/>
</dbReference>
<dbReference type="GO" id="GO:0030136">
    <property type="term" value="C:clathrin-coated vesicle"/>
    <property type="evidence" value="ECO:0000314"/>
    <property type="project" value="RGD"/>
</dbReference>
<dbReference type="GO" id="GO:0030425">
    <property type="term" value="C:dendrite"/>
    <property type="evidence" value="ECO:0000314"/>
    <property type="project" value="RGD"/>
</dbReference>
<dbReference type="GO" id="GO:0005769">
    <property type="term" value="C:early endosome"/>
    <property type="evidence" value="ECO:0000266"/>
    <property type="project" value="RGD"/>
</dbReference>
<dbReference type="GO" id="GO:0005768">
    <property type="term" value="C:endosome"/>
    <property type="evidence" value="ECO:0000314"/>
    <property type="project" value="RGD"/>
</dbReference>
<dbReference type="GO" id="GO:0009897">
    <property type="term" value="C:external side of plasma membrane"/>
    <property type="evidence" value="ECO:0000266"/>
    <property type="project" value="RGD"/>
</dbReference>
<dbReference type="GO" id="GO:0098978">
    <property type="term" value="C:glutamatergic synapse"/>
    <property type="evidence" value="ECO:0000266"/>
    <property type="project" value="RGD"/>
</dbReference>
<dbReference type="GO" id="GO:0005794">
    <property type="term" value="C:Golgi apparatus"/>
    <property type="evidence" value="ECO:0007669"/>
    <property type="project" value="UniProtKB-KW"/>
</dbReference>
<dbReference type="GO" id="GO:0032593">
    <property type="term" value="C:insulin-responsive compartment"/>
    <property type="evidence" value="ECO:0000314"/>
    <property type="project" value="RGD"/>
</dbReference>
<dbReference type="GO" id="GO:0062136">
    <property type="term" value="C:low-density lipoprotein receptor complex"/>
    <property type="evidence" value="ECO:0000303"/>
    <property type="project" value="ComplexPortal"/>
</dbReference>
<dbReference type="GO" id="GO:0016020">
    <property type="term" value="C:membrane"/>
    <property type="evidence" value="ECO:0000266"/>
    <property type="project" value="RGD"/>
</dbReference>
<dbReference type="GO" id="GO:0005815">
    <property type="term" value="C:microtubule organizing center"/>
    <property type="evidence" value="ECO:0007669"/>
    <property type="project" value="UniProtKB-SubCell"/>
</dbReference>
<dbReference type="GO" id="GO:0043025">
    <property type="term" value="C:neuronal cell body"/>
    <property type="evidence" value="ECO:0000314"/>
    <property type="project" value="RGD"/>
</dbReference>
<dbReference type="GO" id="GO:0005634">
    <property type="term" value="C:nucleus"/>
    <property type="evidence" value="ECO:0007669"/>
    <property type="project" value="UniProtKB-SubCell"/>
</dbReference>
<dbReference type="GO" id="GO:0005886">
    <property type="term" value="C:plasma membrane"/>
    <property type="evidence" value="ECO:0000266"/>
    <property type="project" value="RGD"/>
</dbReference>
<dbReference type="GO" id="GO:0098839">
    <property type="term" value="C:postsynaptic density membrane"/>
    <property type="evidence" value="ECO:0000266"/>
    <property type="project" value="RGD"/>
</dbReference>
<dbReference type="GO" id="GO:0043235">
    <property type="term" value="C:receptor complex"/>
    <property type="evidence" value="ECO:0000266"/>
    <property type="project" value="RGD"/>
</dbReference>
<dbReference type="GO" id="GO:0016964">
    <property type="term" value="F:alpha-2 macroglobulin receptor activity"/>
    <property type="evidence" value="ECO:0000266"/>
    <property type="project" value="RGD"/>
</dbReference>
<dbReference type="GO" id="GO:0034185">
    <property type="term" value="F:apolipoprotein binding"/>
    <property type="evidence" value="ECO:0000266"/>
    <property type="project" value="RGD"/>
</dbReference>
<dbReference type="GO" id="GO:0005509">
    <property type="term" value="F:calcium ion binding"/>
    <property type="evidence" value="ECO:0000266"/>
    <property type="project" value="RGD"/>
</dbReference>
<dbReference type="GO" id="GO:0038024">
    <property type="term" value="F:cargo receptor activity"/>
    <property type="evidence" value="ECO:0000266"/>
    <property type="project" value="RGD"/>
</dbReference>
<dbReference type="GO" id="GO:0032050">
    <property type="term" value="F:clathrin heavy chain binding"/>
    <property type="evidence" value="ECO:0000266"/>
    <property type="project" value="RGD"/>
</dbReference>
<dbReference type="GO" id="GO:0015026">
    <property type="term" value="F:coreceptor activity"/>
    <property type="evidence" value="ECO:0000314"/>
    <property type="project" value="RGD"/>
</dbReference>
<dbReference type="GO" id="GO:0002020">
    <property type="term" value="F:protease binding"/>
    <property type="evidence" value="ECO:0000353"/>
    <property type="project" value="RGD"/>
</dbReference>
<dbReference type="GO" id="GO:0120283">
    <property type="term" value="F:protein serine/threonine kinase binding"/>
    <property type="evidence" value="ECO:0000353"/>
    <property type="project" value="RGD"/>
</dbReference>
<dbReference type="GO" id="GO:0044877">
    <property type="term" value="F:protein-containing complex binding"/>
    <property type="evidence" value="ECO:0000266"/>
    <property type="project" value="RGD"/>
</dbReference>
<dbReference type="GO" id="GO:0005102">
    <property type="term" value="F:signaling receptor binding"/>
    <property type="evidence" value="ECO:0000266"/>
    <property type="project" value="RGD"/>
</dbReference>
<dbReference type="GO" id="GO:0097242">
    <property type="term" value="P:amyloid-beta clearance"/>
    <property type="evidence" value="ECO:0000266"/>
    <property type="project" value="RGD"/>
</dbReference>
<dbReference type="GO" id="GO:0150094">
    <property type="term" value="P:amyloid-beta clearance by cellular catabolic process"/>
    <property type="evidence" value="ECO:0000266"/>
    <property type="project" value="RGD"/>
</dbReference>
<dbReference type="GO" id="GO:0150093">
    <property type="term" value="P:amyloid-beta clearance by transcytosis"/>
    <property type="evidence" value="ECO:0000266"/>
    <property type="project" value="RGD"/>
</dbReference>
<dbReference type="GO" id="GO:0035909">
    <property type="term" value="P:aorta morphogenesis"/>
    <property type="evidence" value="ECO:0000266"/>
    <property type="project" value="RGD"/>
</dbReference>
<dbReference type="GO" id="GO:0043277">
    <property type="term" value="P:apoptotic cell clearance"/>
    <property type="evidence" value="ECO:0000266"/>
    <property type="project" value="RGD"/>
</dbReference>
<dbReference type="GO" id="GO:0002265">
    <property type="term" value="P:astrocyte activation involved in immune response"/>
    <property type="evidence" value="ECO:0000266"/>
    <property type="project" value="RGD"/>
</dbReference>
<dbReference type="GO" id="GO:0003279">
    <property type="term" value="P:cardiac septum development"/>
    <property type="evidence" value="ECO:0000266"/>
    <property type="project" value="RGD"/>
</dbReference>
<dbReference type="GO" id="GO:1904646">
    <property type="term" value="P:cellular response to amyloid-beta"/>
    <property type="evidence" value="ECO:0000266"/>
    <property type="project" value="RGD"/>
</dbReference>
<dbReference type="GO" id="GO:0021987">
    <property type="term" value="P:cerebral cortex development"/>
    <property type="evidence" value="ECO:0000270"/>
    <property type="project" value="RGD"/>
</dbReference>
<dbReference type="GO" id="GO:0061642">
    <property type="term" value="P:chemoattraction of axon"/>
    <property type="evidence" value="ECO:0000315"/>
    <property type="project" value="RGD"/>
</dbReference>
<dbReference type="GO" id="GO:0008203">
    <property type="term" value="P:cholesterol metabolic process"/>
    <property type="evidence" value="ECO:0000266"/>
    <property type="project" value="RGD"/>
</dbReference>
<dbReference type="GO" id="GO:0060976">
    <property type="term" value="P:coronary vasculature development"/>
    <property type="evidence" value="ECO:0000266"/>
    <property type="project" value="RGD"/>
</dbReference>
<dbReference type="GO" id="GO:0007167">
    <property type="term" value="P:enzyme-linked receptor protein signaling pathway"/>
    <property type="evidence" value="ECO:0000266"/>
    <property type="project" value="RGD"/>
</dbReference>
<dbReference type="GO" id="GO:0007041">
    <property type="term" value="P:lysosomal transport"/>
    <property type="evidence" value="ECO:0000266"/>
    <property type="project" value="RGD"/>
</dbReference>
<dbReference type="GO" id="GO:0043066">
    <property type="term" value="P:negative regulation of apoptotic process"/>
    <property type="evidence" value="ECO:0000315"/>
    <property type="project" value="RGD"/>
</dbReference>
<dbReference type="GO" id="GO:0010812">
    <property type="term" value="P:negative regulation of cell-substrate adhesion"/>
    <property type="evidence" value="ECO:0000315"/>
    <property type="project" value="RGD"/>
</dbReference>
<dbReference type="GO" id="GO:0051481">
    <property type="term" value="P:negative regulation of cytosolic calcium ion concentration"/>
    <property type="evidence" value="ECO:0000315"/>
    <property type="project" value="RGD"/>
</dbReference>
<dbReference type="GO" id="GO:0010951">
    <property type="term" value="P:negative regulation of endopeptidase activity"/>
    <property type="evidence" value="ECO:0000305"/>
    <property type="project" value="BHF-UCL"/>
</dbReference>
<dbReference type="GO" id="GO:0051895">
    <property type="term" value="P:negative regulation of focal adhesion assembly"/>
    <property type="evidence" value="ECO:0000315"/>
    <property type="project" value="RGD"/>
</dbReference>
<dbReference type="GO" id="GO:0010629">
    <property type="term" value="P:negative regulation of gene expression"/>
    <property type="evidence" value="ECO:0000266"/>
    <property type="project" value="RGD"/>
</dbReference>
<dbReference type="GO" id="GO:0043524">
    <property type="term" value="P:negative regulation of neuron apoptotic process"/>
    <property type="evidence" value="ECO:0000314"/>
    <property type="project" value="RGD"/>
</dbReference>
<dbReference type="GO" id="GO:0010977">
    <property type="term" value="P:negative regulation of neuron projection development"/>
    <property type="evidence" value="ECO:0000315"/>
    <property type="project" value="RGD"/>
</dbReference>
<dbReference type="GO" id="GO:2000587">
    <property type="term" value="P:negative regulation of platelet-derived growth factor receptor-beta signaling pathway"/>
    <property type="evidence" value="ECO:0000266"/>
    <property type="project" value="RGD"/>
</dbReference>
<dbReference type="GO" id="GO:0060392">
    <property type="term" value="P:negative regulation of SMAD protein signal transduction"/>
    <property type="evidence" value="ECO:0000266"/>
    <property type="project" value="RGD"/>
</dbReference>
<dbReference type="GO" id="GO:0014912">
    <property type="term" value="P:negative regulation of smooth muscle cell migration"/>
    <property type="evidence" value="ECO:0000266"/>
    <property type="project" value="RGD"/>
</dbReference>
<dbReference type="GO" id="GO:0030512">
    <property type="term" value="P:negative regulation of transforming growth factor beta receptor signaling pathway"/>
    <property type="evidence" value="ECO:0000266"/>
    <property type="project" value="RGD"/>
</dbReference>
<dbReference type="GO" id="GO:0030178">
    <property type="term" value="P:negative regulation of Wnt signaling pathway"/>
    <property type="evidence" value="ECO:0000266"/>
    <property type="project" value="RGD"/>
</dbReference>
<dbReference type="GO" id="GO:0006909">
    <property type="term" value="P:phagocytosis"/>
    <property type="evidence" value="ECO:0000266"/>
    <property type="project" value="RGD"/>
</dbReference>
<dbReference type="GO" id="GO:1900223">
    <property type="term" value="P:positive regulation of amyloid-beta clearance"/>
    <property type="evidence" value="ECO:0000266"/>
    <property type="project" value="RGD"/>
</dbReference>
<dbReference type="GO" id="GO:0045773">
    <property type="term" value="P:positive regulation of axon extension"/>
    <property type="evidence" value="ECO:0000315"/>
    <property type="project" value="RGD"/>
</dbReference>
<dbReference type="GO" id="GO:0048691">
    <property type="term" value="P:positive regulation of axon extension involved in regeneration"/>
    <property type="evidence" value="ECO:0000314"/>
    <property type="project" value="RGD"/>
</dbReference>
<dbReference type="GO" id="GO:2000343">
    <property type="term" value="P:positive regulation of chemokine (C-X-C motif) ligand 2 production"/>
    <property type="evidence" value="ECO:0000315"/>
    <property type="project" value="RGD"/>
</dbReference>
<dbReference type="GO" id="GO:0010875">
    <property type="term" value="P:positive regulation of cholesterol efflux"/>
    <property type="evidence" value="ECO:0000266"/>
    <property type="project" value="RGD"/>
</dbReference>
<dbReference type="GO" id="GO:1904109">
    <property type="term" value="P:positive regulation of cholesterol import"/>
    <property type="evidence" value="ECO:0000315"/>
    <property type="project" value="RGD"/>
</dbReference>
<dbReference type="GO" id="GO:0032376">
    <property type="term" value="P:positive regulation of cholesterol transport"/>
    <property type="evidence" value="ECO:0000266"/>
    <property type="project" value="ComplexPortal"/>
</dbReference>
<dbReference type="GO" id="GO:0048694">
    <property type="term" value="P:positive regulation of collateral sprouting of injured axon"/>
    <property type="evidence" value="ECO:0000314"/>
    <property type="project" value="RGD"/>
</dbReference>
<dbReference type="GO" id="GO:0007204">
    <property type="term" value="P:positive regulation of cytosolic calcium ion concentration"/>
    <property type="evidence" value="ECO:0000315"/>
    <property type="project" value="RGD"/>
</dbReference>
<dbReference type="GO" id="GO:0045807">
    <property type="term" value="P:positive regulation of endocytosis"/>
    <property type="evidence" value="ECO:0000266"/>
    <property type="project" value="RGD"/>
</dbReference>
<dbReference type="GO" id="GO:0070374">
    <property type="term" value="P:positive regulation of ERK1 and ERK2 cascade"/>
    <property type="evidence" value="ECO:0000315"/>
    <property type="project" value="RGD"/>
</dbReference>
<dbReference type="GO" id="GO:0035774">
    <property type="term" value="P:positive regulation of insulin secretion involved in cellular response to glucose stimulus"/>
    <property type="evidence" value="ECO:0000315"/>
    <property type="project" value="RGD"/>
</dbReference>
<dbReference type="GO" id="GO:0032370">
    <property type="term" value="P:positive regulation of lipid transport"/>
    <property type="evidence" value="ECO:0000266"/>
    <property type="project" value="RGD"/>
</dbReference>
<dbReference type="GO" id="GO:1905167">
    <property type="term" value="P:positive regulation of lysosomal protein catabolic process"/>
    <property type="evidence" value="ECO:0000266"/>
    <property type="project" value="RGD"/>
</dbReference>
<dbReference type="GO" id="GO:0010976">
    <property type="term" value="P:positive regulation of neuron projection development"/>
    <property type="evidence" value="ECO:0000315"/>
    <property type="project" value="RGD"/>
</dbReference>
<dbReference type="GO" id="GO:0050766">
    <property type="term" value="P:positive regulation of phagocytosis"/>
    <property type="evidence" value="ECO:0000315"/>
    <property type="project" value="RGD"/>
</dbReference>
<dbReference type="GO" id="GO:1903078">
    <property type="term" value="P:positive regulation of protein localization to plasma membrane"/>
    <property type="evidence" value="ECO:0000266"/>
    <property type="project" value="RGD"/>
</dbReference>
<dbReference type="GO" id="GO:0051222">
    <property type="term" value="P:positive regulation of protein transport"/>
    <property type="evidence" value="ECO:0000315"/>
    <property type="project" value="RGD"/>
</dbReference>
<dbReference type="GO" id="GO:1900149">
    <property type="term" value="P:positive regulation of Schwann cell migration"/>
    <property type="evidence" value="ECO:0000315"/>
    <property type="project" value="RGD"/>
</dbReference>
<dbReference type="GO" id="GO:1904300">
    <property type="term" value="P:positive regulation of transcytosis"/>
    <property type="evidence" value="ECO:0000266"/>
    <property type="project" value="RGD"/>
</dbReference>
<dbReference type="GO" id="GO:1904754">
    <property type="term" value="P:positive regulation of vascular associated smooth muscle cell migration"/>
    <property type="evidence" value="ECO:0000315"/>
    <property type="project" value="RGD"/>
</dbReference>
<dbReference type="GO" id="GO:0031623">
    <property type="term" value="P:receptor internalization"/>
    <property type="evidence" value="ECO:0000266"/>
    <property type="project" value="ComplexPortal"/>
</dbReference>
<dbReference type="GO" id="GO:0006898">
    <property type="term" value="P:receptor-mediated endocytosis"/>
    <property type="evidence" value="ECO:0000315"/>
    <property type="project" value="BHF-UCL"/>
</dbReference>
<dbReference type="GO" id="GO:0032956">
    <property type="term" value="P:regulation of actin cytoskeleton organization"/>
    <property type="evidence" value="ECO:0000266"/>
    <property type="project" value="RGD"/>
</dbReference>
<dbReference type="GO" id="GO:0032374">
    <property type="term" value="P:regulation of cholesterol transport"/>
    <property type="evidence" value="ECO:0000266"/>
    <property type="project" value="RGD"/>
</dbReference>
<dbReference type="GO" id="GO:0099149">
    <property type="term" value="P:regulation of postsynaptic neurotransmitter receptor internalization"/>
    <property type="evidence" value="ECO:0000266"/>
    <property type="project" value="RGD"/>
</dbReference>
<dbReference type="GO" id="GO:1905109">
    <property type="term" value="P:regulation of pulmonary blood vessel remodeling"/>
    <property type="evidence" value="ECO:0000266"/>
    <property type="project" value="RGD"/>
</dbReference>
<dbReference type="GO" id="GO:0150104">
    <property type="term" value="P:transport across blood-brain barrier"/>
    <property type="evidence" value="ECO:0000266"/>
    <property type="project" value="RGD"/>
</dbReference>
<dbReference type="CDD" id="cd00054">
    <property type="entry name" value="EGF_CA"/>
    <property type="match status" value="1"/>
</dbReference>
<dbReference type="CDD" id="cd00112">
    <property type="entry name" value="LDLa"/>
    <property type="match status" value="31"/>
</dbReference>
<dbReference type="FunFam" id="2.10.25.10:FF:000204">
    <property type="entry name" value="LDL receptor related protein 1"/>
    <property type="match status" value="1"/>
</dbReference>
<dbReference type="FunFam" id="4.10.400.10:FF:000020">
    <property type="entry name" value="LDL receptor related protein 1"/>
    <property type="match status" value="1"/>
</dbReference>
<dbReference type="FunFam" id="4.10.400.10:FF:000022">
    <property type="entry name" value="LDL receptor related protein 1"/>
    <property type="match status" value="1"/>
</dbReference>
<dbReference type="FunFam" id="4.10.400.10:FF:000066">
    <property type="entry name" value="LDL receptor related protein 1"/>
    <property type="match status" value="1"/>
</dbReference>
<dbReference type="FunFam" id="2.120.10.30:FF:000012">
    <property type="entry name" value="Low density lipoprotein receptor-related protein 1"/>
    <property type="match status" value="1"/>
</dbReference>
<dbReference type="FunFam" id="4.10.400.10:FF:000007">
    <property type="entry name" value="Low density lipoprotein receptor-related protein 1"/>
    <property type="match status" value="1"/>
</dbReference>
<dbReference type="FunFam" id="4.10.400.10:FF:000008">
    <property type="entry name" value="Low density lipoprotein receptor-related protein 1"/>
    <property type="match status" value="1"/>
</dbReference>
<dbReference type="FunFam" id="4.10.400.10:FF:000021">
    <property type="entry name" value="Low density lipoprotein receptor-related protein 1"/>
    <property type="match status" value="1"/>
</dbReference>
<dbReference type="FunFam" id="4.10.400.10:FF:000023">
    <property type="entry name" value="Low density lipoprotein receptor-related protein 1"/>
    <property type="match status" value="1"/>
</dbReference>
<dbReference type="FunFam" id="2.120.10.30:FF:000010">
    <property type="entry name" value="Low density lipoprotein receptor-related protein 1B"/>
    <property type="match status" value="1"/>
</dbReference>
<dbReference type="FunFam" id="2.10.25.10:FF:000009">
    <property type="entry name" value="Low-density lipoprotein receptor isoform 1"/>
    <property type="match status" value="1"/>
</dbReference>
<dbReference type="FunFam" id="2.10.25.10:FF:000129">
    <property type="entry name" value="Low-density lipoprotein receptor-related protein 1"/>
    <property type="match status" value="1"/>
</dbReference>
<dbReference type="FunFam" id="2.10.25.10:FF:000144">
    <property type="entry name" value="Low-density lipoprotein receptor-related protein 1"/>
    <property type="match status" value="1"/>
</dbReference>
<dbReference type="FunFam" id="2.10.25.10:FF:000505">
    <property type="entry name" value="Low-density lipoprotein receptor-related protein 1"/>
    <property type="match status" value="1"/>
</dbReference>
<dbReference type="FunFam" id="2.120.10.30:FF:000014">
    <property type="entry name" value="Low-density lipoprotein receptor-related protein 1"/>
    <property type="match status" value="1"/>
</dbReference>
<dbReference type="FunFam" id="2.120.10.30:FF:000015">
    <property type="entry name" value="Low-density lipoprotein receptor-related protein 1"/>
    <property type="match status" value="1"/>
</dbReference>
<dbReference type="FunFam" id="2.120.10.30:FF:000018">
    <property type="entry name" value="Low-density lipoprotein receptor-related protein 1"/>
    <property type="match status" value="1"/>
</dbReference>
<dbReference type="FunFam" id="2.120.10.30:FF:000019">
    <property type="entry name" value="Low-density lipoprotein receptor-related protein 1"/>
    <property type="match status" value="1"/>
</dbReference>
<dbReference type="FunFam" id="4.10.400.10:FF:000001">
    <property type="entry name" value="Low-density lipoprotein receptor-related protein 1"/>
    <property type="match status" value="1"/>
</dbReference>
<dbReference type="FunFam" id="4.10.400.10:FF:000002">
    <property type="entry name" value="Low-density lipoprotein receptor-related protein 1"/>
    <property type="match status" value="4"/>
</dbReference>
<dbReference type="FunFam" id="4.10.400.10:FF:000004">
    <property type="entry name" value="Low-density lipoprotein receptor-related protein 1"/>
    <property type="match status" value="1"/>
</dbReference>
<dbReference type="FunFam" id="4.10.400.10:FF:000009">
    <property type="entry name" value="Low-density lipoprotein receptor-related protein 1"/>
    <property type="match status" value="1"/>
</dbReference>
<dbReference type="FunFam" id="4.10.400.10:FF:000010">
    <property type="entry name" value="Low-density lipoprotein receptor-related protein 1"/>
    <property type="match status" value="1"/>
</dbReference>
<dbReference type="FunFam" id="4.10.400.10:FF:000011">
    <property type="entry name" value="Low-density lipoprotein receptor-related protein 1"/>
    <property type="match status" value="1"/>
</dbReference>
<dbReference type="FunFam" id="4.10.400.10:FF:000012">
    <property type="entry name" value="Low-density lipoprotein receptor-related protein 1"/>
    <property type="match status" value="1"/>
</dbReference>
<dbReference type="FunFam" id="4.10.400.10:FF:000015">
    <property type="entry name" value="Low-density lipoprotein receptor-related protein 1"/>
    <property type="match status" value="1"/>
</dbReference>
<dbReference type="FunFam" id="4.10.400.10:FF:000018">
    <property type="entry name" value="Low-density lipoprotein receptor-related protein 1"/>
    <property type="match status" value="1"/>
</dbReference>
<dbReference type="FunFam" id="4.10.400.10:FF:000026">
    <property type="entry name" value="Low-density lipoprotein receptor-related protein 1"/>
    <property type="match status" value="1"/>
</dbReference>
<dbReference type="FunFam" id="4.10.400.10:FF:000031">
    <property type="entry name" value="Low-density lipoprotein receptor-related protein 1"/>
    <property type="match status" value="1"/>
</dbReference>
<dbReference type="FunFam" id="2.10.25.10:FF:000072">
    <property type="entry name" value="Low-density lipoprotein receptor-related protein 1B"/>
    <property type="match status" value="1"/>
</dbReference>
<dbReference type="FunFam" id="4.10.400.10:FF:000005">
    <property type="entry name" value="low-density lipoprotein receptor-related protein 1B"/>
    <property type="match status" value="1"/>
</dbReference>
<dbReference type="FunFam" id="2.10.25.10:FF:000088">
    <property type="entry name" value="Prolow-density lipoprotein receptor-related protein 1"/>
    <property type="match status" value="2"/>
</dbReference>
<dbReference type="FunFam" id="2.120.10.30:FF:000020">
    <property type="entry name" value="Prolow-density lipoprotein receptor-related protein 1"/>
    <property type="match status" value="1"/>
</dbReference>
<dbReference type="FunFam" id="4.10.400.10:FF:000013">
    <property type="entry name" value="Prolow-density lipoprotein receptor-related protein 1"/>
    <property type="match status" value="1"/>
</dbReference>
<dbReference type="FunFam" id="4.10.400.10:FF:000047">
    <property type="entry name" value="Prolow-density lipoprotein receptor-related protein 1"/>
    <property type="match status" value="1"/>
</dbReference>
<dbReference type="FunFam" id="4.10.400.10:FF:000059">
    <property type="entry name" value="Prolow-density lipoprotein receptor-related protein 1"/>
    <property type="match status" value="1"/>
</dbReference>
<dbReference type="FunFam" id="4.10.400.10:FF:000071">
    <property type="entry name" value="Prolow-density lipoprotein receptor-related protein 1"/>
    <property type="match status" value="1"/>
</dbReference>
<dbReference type="FunFam" id="2.10.25.10:FF:000458">
    <property type="entry name" value="prolow-density lipoprotein receptor-related protein 1"/>
    <property type="match status" value="1"/>
</dbReference>
<dbReference type="FunFam" id="4.10.400.10:FF:000028">
    <property type="entry name" value="prolow-density lipoprotein receptor-related protein 1"/>
    <property type="match status" value="1"/>
</dbReference>
<dbReference type="FunFam" id="4.10.400.10:FF:000029">
    <property type="entry name" value="prolow-density lipoprotein receptor-related protein 1"/>
    <property type="match status" value="1"/>
</dbReference>
<dbReference type="FunFam" id="4.10.400.10:FF:000035">
    <property type="entry name" value="prolow-density lipoprotein receptor-related protein 1"/>
    <property type="match status" value="1"/>
</dbReference>
<dbReference type="FunFam" id="2.120.10.30:FF:000009">
    <property type="entry name" value="Putative low-density lipoprotein receptor-related protein 1B"/>
    <property type="match status" value="1"/>
</dbReference>
<dbReference type="Gene3D" id="4.10.1220.10">
    <property type="entry name" value="EGF-type module"/>
    <property type="match status" value="1"/>
</dbReference>
<dbReference type="Gene3D" id="2.10.25.10">
    <property type="entry name" value="Laminin"/>
    <property type="match status" value="13"/>
</dbReference>
<dbReference type="Gene3D" id="4.10.400.10">
    <property type="entry name" value="Low-density Lipoprotein Receptor"/>
    <property type="match status" value="30"/>
</dbReference>
<dbReference type="Gene3D" id="2.120.10.30">
    <property type="entry name" value="TolB, C-terminal domain"/>
    <property type="match status" value="8"/>
</dbReference>
<dbReference type="InterPro" id="IPR011042">
    <property type="entry name" value="6-blade_b-propeller_TolB-like"/>
</dbReference>
<dbReference type="InterPro" id="IPR026823">
    <property type="entry name" value="cEGF"/>
</dbReference>
<dbReference type="InterPro" id="IPR001881">
    <property type="entry name" value="EGF-like_Ca-bd_dom"/>
</dbReference>
<dbReference type="InterPro" id="IPR000742">
    <property type="entry name" value="EGF-like_dom"/>
</dbReference>
<dbReference type="InterPro" id="IPR000152">
    <property type="entry name" value="EGF-type_Asp/Asn_hydroxyl_site"/>
</dbReference>
<dbReference type="InterPro" id="IPR018097">
    <property type="entry name" value="EGF_Ca-bd_CS"/>
</dbReference>
<dbReference type="InterPro" id="IPR009030">
    <property type="entry name" value="Growth_fac_rcpt_cys_sf"/>
</dbReference>
<dbReference type="InterPro" id="IPR036055">
    <property type="entry name" value="LDL_receptor-like_sf"/>
</dbReference>
<dbReference type="InterPro" id="IPR051221">
    <property type="entry name" value="LDLR-related"/>
</dbReference>
<dbReference type="InterPro" id="IPR023415">
    <property type="entry name" value="LDLR_class-A_CS"/>
</dbReference>
<dbReference type="InterPro" id="IPR000033">
    <property type="entry name" value="LDLR_classB_rpt"/>
</dbReference>
<dbReference type="InterPro" id="IPR002172">
    <property type="entry name" value="LDrepeatLR_classA_rpt"/>
</dbReference>
<dbReference type="InterPro" id="IPR032485">
    <property type="entry name" value="LRP1-like_beta_prop"/>
</dbReference>
<dbReference type="InterPro" id="IPR049883">
    <property type="entry name" value="NOTCH1_EGF-like"/>
</dbReference>
<dbReference type="PANTHER" id="PTHR22722:SF15">
    <property type="entry name" value="LOW-DENSITY LIPOPROTEIN RECEPTOR-RELATED"/>
    <property type="match status" value="1"/>
</dbReference>
<dbReference type="PANTHER" id="PTHR22722">
    <property type="entry name" value="LOW-DENSITY LIPOPROTEIN RECEPTOR-RELATED PROTEIN 2-RELATED"/>
    <property type="match status" value="1"/>
</dbReference>
<dbReference type="Pfam" id="PF12662">
    <property type="entry name" value="cEGF"/>
    <property type="match status" value="1"/>
</dbReference>
<dbReference type="Pfam" id="PF16472">
    <property type="entry name" value="DUF5050"/>
    <property type="match status" value="1"/>
</dbReference>
<dbReference type="Pfam" id="PF00008">
    <property type="entry name" value="EGF"/>
    <property type="match status" value="1"/>
</dbReference>
<dbReference type="Pfam" id="PF07645">
    <property type="entry name" value="EGF_CA"/>
    <property type="match status" value="2"/>
</dbReference>
<dbReference type="Pfam" id="PF14670">
    <property type="entry name" value="FXa_inhibition"/>
    <property type="match status" value="3"/>
</dbReference>
<dbReference type="Pfam" id="PF00057">
    <property type="entry name" value="Ldl_recept_a"/>
    <property type="match status" value="29"/>
</dbReference>
<dbReference type="Pfam" id="PF00058">
    <property type="entry name" value="Ldl_recept_b"/>
    <property type="match status" value="12"/>
</dbReference>
<dbReference type="PRINTS" id="PR00261">
    <property type="entry name" value="LDLRECEPTOR"/>
</dbReference>
<dbReference type="SMART" id="SM00181">
    <property type="entry name" value="EGF"/>
    <property type="match status" value="26"/>
</dbReference>
<dbReference type="SMART" id="SM00179">
    <property type="entry name" value="EGF_CA"/>
    <property type="match status" value="7"/>
</dbReference>
<dbReference type="SMART" id="SM00192">
    <property type="entry name" value="LDLa"/>
    <property type="match status" value="31"/>
</dbReference>
<dbReference type="SMART" id="SM00135">
    <property type="entry name" value="LY"/>
    <property type="match status" value="35"/>
</dbReference>
<dbReference type="SUPFAM" id="SSF57196">
    <property type="entry name" value="EGF/Laminin"/>
    <property type="match status" value="5"/>
</dbReference>
<dbReference type="SUPFAM" id="SSF57184">
    <property type="entry name" value="Growth factor receptor domain"/>
    <property type="match status" value="3"/>
</dbReference>
<dbReference type="SUPFAM" id="SSF57424">
    <property type="entry name" value="LDL receptor-like module"/>
    <property type="match status" value="30"/>
</dbReference>
<dbReference type="SUPFAM" id="SSF63825">
    <property type="entry name" value="YWTD domain"/>
    <property type="match status" value="8"/>
</dbReference>
<dbReference type="PROSITE" id="PS00010">
    <property type="entry name" value="ASX_HYDROXYL"/>
    <property type="match status" value="3"/>
</dbReference>
<dbReference type="PROSITE" id="PS00022">
    <property type="entry name" value="EGF_1"/>
    <property type="match status" value="5"/>
</dbReference>
<dbReference type="PROSITE" id="PS01186">
    <property type="entry name" value="EGF_2"/>
    <property type="match status" value="8"/>
</dbReference>
<dbReference type="PROSITE" id="PS50026">
    <property type="entry name" value="EGF_3"/>
    <property type="match status" value="6"/>
</dbReference>
<dbReference type="PROSITE" id="PS01187">
    <property type="entry name" value="EGF_CA"/>
    <property type="match status" value="2"/>
</dbReference>
<dbReference type="PROSITE" id="PS01209">
    <property type="entry name" value="LDLRA_1"/>
    <property type="match status" value="27"/>
</dbReference>
<dbReference type="PROSITE" id="PS50068">
    <property type="entry name" value="LDLRA_2"/>
    <property type="match status" value="31"/>
</dbReference>
<dbReference type="PROSITE" id="PS51120">
    <property type="entry name" value="LDLRB"/>
    <property type="match status" value="34"/>
</dbReference>
<keyword id="KW-0007">Acetylation</keyword>
<keyword id="KW-0106">Calcium</keyword>
<keyword id="KW-1003">Cell membrane</keyword>
<keyword id="KW-0168">Coated pit</keyword>
<keyword id="KW-0963">Cytoplasm</keyword>
<keyword id="KW-0206">Cytoskeleton</keyword>
<keyword id="KW-0217">Developmental protein</keyword>
<keyword id="KW-1015">Disulfide bond</keyword>
<keyword id="KW-0245">EGF-like domain</keyword>
<keyword id="KW-0254">Endocytosis</keyword>
<keyword id="KW-0325">Glycoprotein</keyword>
<keyword id="KW-0333">Golgi apparatus</keyword>
<keyword id="KW-0472">Membrane</keyword>
<keyword id="KW-0479">Metal-binding</keyword>
<keyword id="KW-0539">Nucleus</keyword>
<keyword id="KW-0597">Phosphoprotein</keyword>
<keyword id="KW-0675">Receptor</keyword>
<keyword id="KW-1185">Reference proteome</keyword>
<keyword id="KW-0677">Repeat</keyword>
<keyword id="KW-0732">Signal</keyword>
<keyword id="KW-0812">Transmembrane</keyword>
<keyword id="KW-1133">Transmembrane helix</keyword>
<gene>
    <name evidence="12" type="primary">Lrp1</name>
</gene>
<name>LRP1_RAT</name>